<feature type="signal peptide" evidence="5">
    <location>
        <begin position="1"/>
        <end position="22"/>
    </location>
</feature>
<feature type="chain" id="PRO_0000000366" description="Neuronal acetylcholine receptor subunit alpha-7">
    <location>
        <begin position="23"/>
        <end position="502"/>
    </location>
</feature>
<feature type="topological domain" description="Extracellular" evidence="19 28">
    <location>
        <begin position="23"/>
        <end position="233"/>
    </location>
</feature>
<feature type="transmembrane region" description="Helical" evidence="19 28">
    <location>
        <begin position="234"/>
        <end position="254"/>
    </location>
</feature>
<feature type="transmembrane region" description="Helical" evidence="19 28">
    <location>
        <begin position="259"/>
        <end position="279"/>
    </location>
</feature>
<feature type="transmembrane region" description="Helical" evidence="19 28">
    <location>
        <begin position="292"/>
        <end position="315"/>
    </location>
</feature>
<feature type="topological domain" description="Cytoplasmic" evidence="5">
    <location>
        <begin position="316"/>
        <end position="466"/>
    </location>
</feature>
<feature type="transmembrane region" description="Helical" evidence="19 28">
    <location>
        <begin position="467"/>
        <end position="489"/>
    </location>
</feature>
<feature type="region of interest" description="Essential for TMEM35A/NACHO-mediated proper subunit assembly and trafficking to cell membrane" evidence="2">
    <location>
        <begin position="260"/>
        <end position="267"/>
    </location>
</feature>
<feature type="binding site" evidence="19 21 30 31 33 34 37 39 41">
    <location>
        <position position="42"/>
    </location>
    <ligand>
        <name>Ca(2+)</name>
        <dbReference type="ChEBI" id="CHEBI:29108"/>
    </ligand>
</feature>
<feature type="binding site" evidence="19 21 30 31 33 34 35 39 41">
    <location>
        <position position="44"/>
    </location>
    <ligand>
        <name>Ca(2+)</name>
        <dbReference type="ChEBI" id="CHEBI:29108"/>
    </ligand>
</feature>
<feature type="binding site" evidence="21 31 33 34 35 37 40 41">
    <location>
        <position position="172"/>
    </location>
    <ligand>
        <name>Ca(2+)</name>
        <dbReference type="ChEBI" id="CHEBI:29108"/>
    </ligand>
</feature>
<feature type="binding site" evidence="21 41">
    <location>
        <position position="210"/>
    </location>
    <ligand>
        <name>Ca(2+)</name>
        <dbReference type="ChEBI" id="CHEBI:29108"/>
    </ligand>
</feature>
<feature type="glycosylation site" description="N-linked (GlcNAc...) asparagine" evidence="5">
    <location>
        <position position="46"/>
    </location>
</feature>
<feature type="glycosylation site" description="N-linked (GlcNAc...) asparagine" evidence="5">
    <location>
        <position position="90"/>
    </location>
</feature>
<feature type="glycosylation site" description="N-linked (GlcNAc...) asparagine" evidence="5">
    <location>
        <position position="133"/>
    </location>
</feature>
<feature type="disulfide bond" evidence="19 21 30 31 33 34 37 39 41">
    <location>
        <begin position="150"/>
        <end position="164"/>
    </location>
</feature>
<feature type="disulfide bond" description="Associated with receptor activation" evidence="19 29 30">
    <location>
        <begin position="212"/>
        <end position="213"/>
    </location>
</feature>
<feature type="splice variant" id="VSP_043019" description="In isoform 2." evidence="23">
    <original>H</original>
    <variation>HGKATASPPSTPPWDPGHIPGASVRPAPGP</variation>
    <location>
        <position position="18"/>
    </location>
</feature>
<feature type="splice variant" id="VSP_058107" description="In isoform 3." evidence="24">
    <original>SWTDHYLQWNVSEYPGVKTVRF</original>
    <variation>AYSRVPATSMYAGFPLMCSTAN</variation>
    <location>
        <begin position="81"/>
        <end position="102"/>
    </location>
</feature>
<feature type="splice variant" id="VSP_058108" description="In isoform 3." evidence="24">
    <location>
        <begin position="103"/>
        <end position="502"/>
    </location>
</feature>
<feature type="mutagenesis site" description="Decreases permeability to Ca(2+). No effect on permeability to K(+)." evidence="19">
    <original>E</original>
    <variation>A</variation>
    <location>
        <position position="120"/>
    </location>
</feature>
<feature type="mutagenesis site" description="115-fold more potently inhibited by the alpha-conotoxin ImI; but no change in inhibition by the alpha-conotoxin ImII." evidence="9">
    <original>Q</original>
    <variation>S</variation>
    <location>
        <position position="139"/>
    </location>
</feature>
<feature type="mutagenesis site" description="No effect on ligand-gated cation channel activity." evidence="19">
    <original>W</original>
    <variation>A</variation>
    <location>
        <position position="156"/>
    </location>
</feature>
<feature type="mutagenesis site" description="No effect on ligand-gated cation channel activity." evidence="19">
    <original>R</original>
    <variation>A</variation>
    <location>
        <position position="227"/>
    </location>
</feature>
<feature type="mutagenesis site" description="Loss of ligand-gated cation channel activity." evidence="19">
    <location>
        <position position="490"/>
    </location>
</feature>
<feature type="mutagenesis site" description="Loss of ligand-gated cation channel activity." evidence="19">
    <original>P</original>
    <variation>A</variation>
    <location>
        <position position="491"/>
    </location>
</feature>
<feature type="mutagenesis site" description="No effect on ligand-gated cation channel activity." evidence="19">
    <original>D</original>
    <variation>A</variation>
    <location>
        <position position="500"/>
    </location>
</feature>
<feature type="sequence conflict" description="In Ref. 1; CAA49778." evidence="25" ref="1">
    <original>A</original>
    <variation>G</variation>
    <location>
        <position position="11"/>
    </location>
</feature>
<feature type="sequence conflict" description="In Ref. 6; AAK68111." evidence="25" ref="6">
    <original>S</original>
    <variation>N</variation>
    <location>
        <position position="58"/>
    </location>
</feature>
<feature type="sequence conflict" description="In Ref. 6; AAK68111." evidence="25" ref="6">
    <original>S</original>
    <variation>P</variation>
    <location>
        <position position="134"/>
    </location>
</feature>
<feature type="sequence conflict" description="In Ref. 11; CAA80672." evidence="25" ref="11">
    <original>C</original>
    <variation>S</variation>
    <location>
        <position position="364"/>
    </location>
</feature>
<feature type="sequence conflict" description="In Ref. 1; CAA49778." evidence="25" ref="1">
    <original>A</original>
    <variation>G</variation>
    <location>
        <position position="375"/>
    </location>
</feature>
<feature type="sequence conflict" description="In Ref. 11; CAA80672." evidence="25" ref="11">
    <original>RMACS</original>
    <variation>AWPAP</variation>
    <location>
        <begin position="409"/>
        <end position="413"/>
    </location>
</feature>
<feature type="helix" evidence="43">
    <location>
        <begin position="24"/>
        <end position="34"/>
    </location>
</feature>
<feature type="strand" evidence="51">
    <location>
        <begin position="45"/>
        <end position="49"/>
    </location>
</feature>
<feature type="strand" evidence="43">
    <location>
        <begin position="52"/>
        <end position="66"/>
    </location>
</feature>
<feature type="turn" evidence="43">
    <location>
        <begin position="67"/>
        <end position="70"/>
    </location>
</feature>
<feature type="strand" evidence="43">
    <location>
        <begin position="78"/>
        <end position="83"/>
    </location>
</feature>
<feature type="helix" evidence="43">
    <location>
        <begin position="85"/>
        <end position="87"/>
    </location>
</feature>
<feature type="turn" evidence="43">
    <location>
        <begin position="91"/>
        <end position="93"/>
    </location>
</feature>
<feature type="strand" evidence="42">
    <location>
        <begin position="94"/>
        <end position="96"/>
    </location>
</feature>
<feature type="strand" evidence="52">
    <location>
        <begin position="99"/>
        <end position="102"/>
    </location>
</feature>
<feature type="turn" evidence="50">
    <location>
        <begin position="104"/>
        <end position="106"/>
    </location>
</feature>
<feature type="strand" evidence="52">
    <location>
        <begin position="112"/>
        <end position="114"/>
    </location>
</feature>
<feature type="strand" evidence="46">
    <location>
        <begin position="120"/>
        <end position="122"/>
    </location>
</feature>
<feature type="strand" evidence="43">
    <location>
        <begin position="131"/>
        <end position="133"/>
    </location>
</feature>
<feature type="strand" evidence="52">
    <location>
        <begin position="137"/>
        <end position="140"/>
    </location>
</feature>
<feature type="strand" evidence="52">
    <location>
        <begin position="143"/>
        <end position="149"/>
    </location>
</feature>
<feature type="turn" evidence="52">
    <location>
        <begin position="155"/>
        <end position="158"/>
    </location>
</feature>
<feature type="strand" evidence="43">
    <location>
        <begin position="165"/>
        <end position="171"/>
    </location>
</feature>
<feature type="turn" evidence="52">
    <location>
        <begin position="175"/>
        <end position="177"/>
    </location>
</feature>
<feature type="strand" evidence="43">
    <location>
        <begin position="178"/>
        <end position="182"/>
    </location>
</feature>
<feature type="strand" evidence="43">
    <location>
        <begin position="198"/>
        <end position="200"/>
    </location>
</feature>
<feature type="strand" evidence="43">
    <location>
        <begin position="205"/>
        <end position="208"/>
    </location>
</feature>
<feature type="turn" evidence="44">
    <location>
        <begin position="211"/>
        <end position="213"/>
    </location>
</feature>
<feature type="strand" evidence="43">
    <location>
        <begin position="217"/>
        <end position="225"/>
    </location>
</feature>
<feature type="strand" evidence="47">
    <location>
        <begin position="226"/>
        <end position="228"/>
    </location>
</feature>
<feature type="helix" evidence="52">
    <location>
        <begin position="231"/>
        <end position="236"/>
    </location>
</feature>
<feature type="helix" evidence="52">
    <location>
        <begin position="238"/>
        <end position="249"/>
    </location>
</feature>
<feature type="helix" evidence="52">
    <location>
        <begin position="250"/>
        <end position="252"/>
    </location>
</feature>
<feature type="helix" evidence="52">
    <location>
        <begin position="256"/>
        <end position="258"/>
    </location>
</feature>
<feature type="helix" evidence="52">
    <location>
        <begin position="261"/>
        <end position="280"/>
    </location>
</feature>
<feature type="strand" evidence="49">
    <location>
        <begin position="287"/>
        <end position="289"/>
    </location>
</feature>
<feature type="helix" evidence="52">
    <location>
        <begin position="292"/>
        <end position="318"/>
    </location>
</feature>
<feature type="strand" evidence="52">
    <location>
        <begin position="322"/>
        <end position="325"/>
    </location>
</feature>
<feature type="helix" evidence="52">
    <location>
        <begin position="329"/>
        <end position="334"/>
    </location>
</feature>
<feature type="turn" evidence="52">
    <location>
        <begin position="335"/>
        <end position="337"/>
    </location>
</feature>
<feature type="helix" evidence="52">
    <location>
        <begin position="338"/>
        <end position="342"/>
    </location>
</feature>
<feature type="turn" evidence="45">
    <location>
        <begin position="348"/>
        <end position="352"/>
    </location>
</feature>
<feature type="strand" evidence="45">
    <location>
        <begin position="353"/>
        <end position="355"/>
    </location>
</feature>
<feature type="helix" evidence="45">
    <location>
        <begin position="360"/>
        <end position="362"/>
    </location>
</feature>
<feature type="turn" evidence="45">
    <location>
        <begin position="366"/>
        <end position="368"/>
    </location>
</feature>
<feature type="turn" evidence="45">
    <location>
        <begin position="371"/>
        <end position="373"/>
    </location>
</feature>
<feature type="turn" evidence="45">
    <location>
        <begin position="380"/>
        <end position="383"/>
    </location>
</feature>
<feature type="helix" evidence="45">
    <location>
        <begin position="384"/>
        <end position="389"/>
    </location>
</feature>
<feature type="strand" evidence="48">
    <location>
        <begin position="392"/>
        <end position="394"/>
    </location>
</feature>
<feature type="turn" evidence="45">
    <location>
        <begin position="395"/>
        <end position="397"/>
    </location>
</feature>
<feature type="turn" evidence="45">
    <location>
        <begin position="405"/>
        <end position="408"/>
    </location>
</feature>
<feature type="strand" evidence="48">
    <location>
        <begin position="411"/>
        <end position="413"/>
    </location>
</feature>
<feature type="strand" evidence="48">
    <location>
        <begin position="427"/>
        <end position="429"/>
    </location>
</feature>
<feature type="helix" evidence="52">
    <location>
        <begin position="432"/>
        <end position="488"/>
    </location>
</feature>
<feature type="helix" evidence="52">
    <location>
        <begin position="493"/>
        <end position="500"/>
    </location>
</feature>
<gene>
    <name evidence="27" type="primary">CHRNA7</name>
    <name type="synonym">NACHRA7</name>
</gene>
<proteinExistence type="evidence at protein level"/>
<reference key="1">
    <citation type="journal article" date="1994" name="Mol. Pharmacol.">
        <title>Human alpha 7 acetylcholine receptor: cloning of the alpha 7 subunit from the SH-SY5Y cell line and determination of pharmacological properties of native receptors and functional alpha 7 homomers expressed in Xenopus oocytes.</title>
        <authorList>
            <person name="Peng X."/>
            <person name="Katz M."/>
            <person name="Gerzanich V."/>
            <person name="Anand R."/>
            <person name="Lindstrom J."/>
        </authorList>
    </citation>
    <scope>NUCLEOTIDE SEQUENCE [MRNA] (ISOFORM 1)</scope>
    <scope>FUNCTION</scope>
    <scope>CATALYTIC ACTIVITY</scope>
    <scope>ACTIVITY REGULATION</scope>
    <scope>TISSUE SPECIFICITY</scope>
    <source>
        <tissue>Brain</tissue>
    </source>
</reference>
<reference key="2">
    <citation type="journal article" date="1998" name="Genomics">
        <title>Genomic organization and partial duplication of the human alpha7 neuronal nicotinic acetylcholine receptor gene (CHRNA7).</title>
        <authorList>
            <person name="Gault J."/>
            <person name="Robinson M."/>
            <person name="Berger R."/>
            <person name="Drebing C."/>
            <person name="Logel J."/>
            <person name="Hopkins J."/>
            <person name="Moore T."/>
            <person name="Jacobs S."/>
            <person name="Meriwether J."/>
            <person name="Choi M.J."/>
            <person name="Kim E.J."/>
            <person name="Walton K."/>
            <person name="Buiting K."/>
            <person name="Davis A."/>
            <person name="Breese C."/>
            <person name="Freedman R."/>
            <person name="Leonard S."/>
        </authorList>
    </citation>
    <scope>NUCLEOTIDE SEQUENCE [MRNA] (ISOFORM 1)</scope>
    <source>
        <tissue>Hippocampus</tissue>
    </source>
</reference>
<reference key="3">
    <citation type="journal article" date="1996" name="J. Mol. Neurosci.">
        <title>Comparative structure of human neuronal alpha 2-alpha 7 and beta 2-beta 4 nicotinic acetylcholine receptor subunits and functional expression of the alpha 2, alpha 3, alpha 4, alpha 7, beta 2, and beta 4 subunits.</title>
        <authorList>
            <person name="Elliott K.J."/>
            <person name="Ellis S.B."/>
            <person name="Berckhan K.J."/>
            <person name="Urrutia A."/>
            <person name="Chavez-Noriega L.E."/>
            <person name="Johnson E.C."/>
            <person name="Velicelebi G."/>
            <person name="Harpold M.M."/>
        </authorList>
    </citation>
    <scope>NUCLEOTIDE SEQUENCE [MRNA] (ISOFORM 1)</scope>
</reference>
<reference key="4">
    <citation type="journal article" date="1997" name="FEBS Lett.">
        <title>Cloning and sequence of full-length cDNAs encoding the human neuronal nicotinic acetylcholine receptor (nAChR) subunits beta3 and beta4 and expression of seven nAChR subunits in the human neuroblastoma cell line SH-SY5Y and/or IMR-32.</title>
        <authorList>
            <person name="Groot Kormelink P.J."/>
            <person name="Luyten W.H.M.L."/>
        </authorList>
    </citation>
    <scope>NUCLEOTIDE SEQUENCE [MRNA] (ISOFORM 1)</scope>
</reference>
<reference key="5">
    <citation type="submission" date="1998-01" db="EMBL/GenBank/DDBJ databases">
        <authorList>
            <person name="Groot Kormelink P.J."/>
            <person name="Luyten W.H.M.L."/>
        </authorList>
    </citation>
    <scope>SEQUENCE REVISION</scope>
</reference>
<reference key="6">
    <citation type="submission" date="2001-05" db="EMBL/GenBank/DDBJ databases">
        <title>Cloning cholinergic receptors in human keratinocytes.</title>
        <authorList>
            <person name="Arredondo J."/>
            <person name="Grando S.A."/>
        </authorList>
    </citation>
    <scope>NUCLEOTIDE SEQUENCE [MRNA] (ISOFORM 1)</scope>
    <source>
        <tissue>Keratinocyte</tissue>
    </source>
</reference>
<reference key="7">
    <citation type="journal article" date="2004" name="Nat. Genet.">
        <title>Complete sequencing and characterization of 21,243 full-length human cDNAs.</title>
        <authorList>
            <person name="Ota T."/>
            <person name="Suzuki Y."/>
            <person name="Nishikawa T."/>
            <person name="Otsuki T."/>
            <person name="Sugiyama T."/>
            <person name="Irie R."/>
            <person name="Wakamatsu A."/>
            <person name="Hayashi K."/>
            <person name="Sato H."/>
            <person name="Nagai K."/>
            <person name="Kimura K."/>
            <person name="Makita H."/>
            <person name="Sekine M."/>
            <person name="Obayashi M."/>
            <person name="Nishi T."/>
            <person name="Shibahara T."/>
            <person name="Tanaka T."/>
            <person name="Ishii S."/>
            <person name="Yamamoto J."/>
            <person name="Saito K."/>
            <person name="Kawai Y."/>
            <person name="Isono Y."/>
            <person name="Nakamura Y."/>
            <person name="Nagahari K."/>
            <person name="Murakami K."/>
            <person name="Yasuda T."/>
            <person name="Iwayanagi T."/>
            <person name="Wagatsuma M."/>
            <person name="Shiratori A."/>
            <person name="Sudo H."/>
            <person name="Hosoiri T."/>
            <person name="Kaku Y."/>
            <person name="Kodaira H."/>
            <person name="Kondo H."/>
            <person name="Sugawara M."/>
            <person name="Takahashi M."/>
            <person name="Kanda K."/>
            <person name="Yokoi T."/>
            <person name="Furuya T."/>
            <person name="Kikkawa E."/>
            <person name="Omura Y."/>
            <person name="Abe K."/>
            <person name="Kamihara K."/>
            <person name="Katsuta N."/>
            <person name="Sato K."/>
            <person name="Tanikawa M."/>
            <person name="Yamazaki M."/>
            <person name="Ninomiya K."/>
            <person name="Ishibashi T."/>
            <person name="Yamashita H."/>
            <person name="Murakawa K."/>
            <person name="Fujimori K."/>
            <person name="Tanai H."/>
            <person name="Kimata M."/>
            <person name="Watanabe M."/>
            <person name="Hiraoka S."/>
            <person name="Chiba Y."/>
            <person name="Ishida S."/>
            <person name="Ono Y."/>
            <person name="Takiguchi S."/>
            <person name="Watanabe S."/>
            <person name="Yosida M."/>
            <person name="Hotuta T."/>
            <person name="Kusano J."/>
            <person name="Kanehori K."/>
            <person name="Takahashi-Fujii A."/>
            <person name="Hara H."/>
            <person name="Tanase T.-O."/>
            <person name="Nomura Y."/>
            <person name="Togiya S."/>
            <person name="Komai F."/>
            <person name="Hara R."/>
            <person name="Takeuchi K."/>
            <person name="Arita M."/>
            <person name="Imose N."/>
            <person name="Musashino K."/>
            <person name="Yuuki H."/>
            <person name="Oshima A."/>
            <person name="Sasaki N."/>
            <person name="Aotsuka S."/>
            <person name="Yoshikawa Y."/>
            <person name="Matsunawa H."/>
            <person name="Ichihara T."/>
            <person name="Shiohata N."/>
            <person name="Sano S."/>
            <person name="Moriya S."/>
            <person name="Momiyama H."/>
            <person name="Satoh N."/>
            <person name="Takami S."/>
            <person name="Terashima Y."/>
            <person name="Suzuki O."/>
            <person name="Nakagawa S."/>
            <person name="Senoh A."/>
            <person name="Mizoguchi H."/>
            <person name="Goto Y."/>
            <person name="Shimizu F."/>
            <person name="Wakebe H."/>
            <person name="Hishigaki H."/>
            <person name="Watanabe T."/>
            <person name="Sugiyama A."/>
            <person name="Takemoto M."/>
            <person name="Kawakami B."/>
            <person name="Yamazaki M."/>
            <person name="Watanabe K."/>
            <person name="Kumagai A."/>
            <person name="Itakura S."/>
            <person name="Fukuzumi Y."/>
            <person name="Fujimori Y."/>
            <person name="Komiyama M."/>
            <person name="Tashiro H."/>
            <person name="Tanigami A."/>
            <person name="Fujiwara T."/>
            <person name="Ono T."/>
            <person name="Yamada K."/>
            <person name="Fujii Y."/>
            <person name="Ozaki K."/>
            <person name="Hirao M."/>
            <person name="Ohmori Y."/>
            <person name="Kawabata A."/>
            <person name="Hikiji T."/>
            <person name="Kobatake N."/>
            <person name="Inagaki H."/>
            <person name="Ikema Y."/>
            <person name="Okamoto S."/>
            <person name="Okitani R."/>
            <person name="Kawakami T."/>
            <person name="Noguchi S."/>
            <person name="Itoh T."/>
            <person name="Shigeta K."/>
            <person name="Senba T."/>
            <person name="Matsumura K."/>
            <person name="Nakajima Y."/>
            <person name="Mizuno T."/>
            <person name="Morinaga M."/>
            <person name="Sasaki M."/>
            <person name="Togashi T."/>
            <person name="Oyama M."/>
            <person name="Hata H."/>
            <person name="Watanabe M."/>
            <person name="Komatsu T."/>
            <person name="Mizushima-Sugano J."/>
            <person name="Satoh T."/>
            <person name="Shirai Y."/>
            <person name="Takahashi Y."/>
            <person name="Nakagawa K."/>
            <person name="Okumura K."/>
            <person name="Nagase T."/>
            <person name="Nomura N."/>
            <person name="Kikuchi H."/>
            <person name="Masuho Y."/>
            <person name="Yamashita R."/>
            <person name="Nakai K."/>
            <person name="Yada T."/>
            <person name="Nakamura Y."/>
            <person name="Ohara O."/>
            <person name="Isogai T."/>
            <person name="Sugano S."/>
        </authorList>
    </citation>
    <scope>NUCLEOTIDE SEQUENCE [LARGE SCALE MRNA] (ISOFORMS 1 AND 2)</scope>
    <source>
        <tissue>Amygdala</tissue>
        <tissue>Stomach</tissue>
    </source>
</reference>
<reference key="8">
    <citation type="journal article" date="2006" name="Nature">
        <title>Analysis of the DNA sequence and duplication history of human chromosome 15.</title>
        <authorList>
            <person name="Zody M.C."/>
            <person name="Garber M."/>
            <person name="Sharpe T."/>
            <person name="Young S.K."/>
            <person name="Rowen L."/>
            <person name="O'Neill K."/>
            <person name="Whittaker C.A."/>
            <person name="Kamal M."/>
            <person name="Chang J.L."/>
            <person name="Cuomo C.A."/>
            <person name="Dewar K."/>
            <person name="FitzGerald M.G."/>
            <person name="Kodira C.D."/>
            <person name="Madan A."/>
            <person name="Qin S."/>
            <person name="Yang X."/>
            <person name="Abbasi N."/>
            <person name="Abouelleil A."/>
            <person name="Arachchi H.M."/>
            <person name="Baradarani L."/>
            <person name="Birditt B."/>
            <person name="Bloom S."/>
            <person name="Bloom T."/>
            <person name="Borowsky M.L."/>
            <person name="Burke J."/>
            <person name="Butler J."/>
            <person name="Cook A."/>
            <person name="DeArellano K."/>
            <person name="DeCaprio D."/>
            <person name="Dorris L. III"/>
            <person name="Dors M."/>
            <person name="Eichler E.E."/>
            <person name="Engels R."/>
            <person name="Fahey J."/>
            <person name="Fleetwood P."/>
            <person name="Friedman C."/>
            <person name="Gearin G."/>
            <person name="Hall J.L."/>
            <person name="Hensley G."/>
            <person name="Johnson E."/>
            <person name="Jones C."/>
            <person name="Kamat A."/>
            <person name="Kaur A."/>
            <person name="Locke D.P."/>
            <person name="Madan A."/>
            <person name="Munson G."/>
            <person name="Jaffe D.B."/>
            <person name="Lui A."/>
            <person name="Macdonald P."/>
            <person name="Mauceli E."/>
            <person name="Naylor J.W."/>
            <person name="Nesbitt R."/>
            <person name="Nicol R."/>
            <person name="O'Leary S.B."/>
            <person name="Ratcliffe A."/>
            <person name="Rounsley S."/>
            <person name="She X."/>
            <person name="Sneddon K.M.B."/>
            <person name="Stewart S."/>
            <person name="Sougnez C."/>
            <person name="Stone S.M."/>
            <person name="Topham K."/>
            <person name="Vincent D."/>
            <person name="Wang S."/>
            <person name="Zimmer A.R."/>
            <person name="Birren B.W."/>
            <person name="Hood L."/>
            <person name="Lander E.S."/>
            <person name="Nusbaum C."/>
        </authorList>
    </citation>
    <scope>NUCLEOTIDE SEQUENCE [LARGE SCALE GENOMIC DNA]</scope>
</reference>
<reference key="9">
    <citation type="journal article" date="2004" name="Genome Res.">
        <title>The status, quality, and expansion of the NIH full-length cDNA project: the Mammalian Gene Collection (MGC).</title>
        <authorList>
            <consortium name="The MGC Project Team"/>
        </authorList>
    </citation>
    <scope>NUCLEOTIDE SEQUENCE [LARGE SCALE MRNA] (ISOFORM 3)</scope>
    <source>
        <tissue>Brain</tissue>
    </source>
</reference>
<reference key="10">
    <citation type="journal article" date="1993" name="Drug Dev. Res.">
        <title>Cloning and sequence of the human alpha-7 nicotinic acetylcholine receptor.</title>
        <authorList>
            <person name="Doucette-Stamm L."/>
            <person name="Monteggia L.M."/>
            <person name="Donnelly-Roberts D."/>
            <person name="Wang M.T."/>
            <person name="Lee J."/>
            <person name="Tian J."/>
            <person name="Giordano T."/>
        </authorList>
    </citation>
    <scope>NUCLEOTIDE SEQUENCE [MRNA] OF 17-502 (ISOFORM 1)</scope>
    <source>
        <tissue>Brain</tissue>
    </source>
</reference>
<reference key="11">
    <citation type="journal article" date="1994" name="Genomics">
        <title>Molecular cloning and chromosomal localization of the human alpha 7-nicotinic receptor subunit gene (CHRNA7).</title>
        <authorList>
            <person name="Chini B."/>
            <person name="Raimondi E."/>
            <person name="Elgoyhen A.B."/>
            <person name="Moralli D."/>
            <person name="Balzaretti M."/>
            <person name="Heinemann S.F."/>
        </authorList>
    </citation>
    <scope>NUCLEOTIDE SEQUENCE [MRNA] OF 24-502 (ISOFORM 1)</scope>
    <source>
        <tissue>Retina</tissue>
    </source>
</reference>
<reference key="12">
    <citation type="journal article" date="2002" name="Genomics">
        <title>A 3-Mb map of a large segmental duplication overlapping the alpha7-nicotinic acetylcholine receptor gene (CHRNA7) at human 15q13-q14.</title>
        <authorList>
            <person name="Riley B."/>
            <person name="Williamson M."/>
            <person name="Collier D."/>
            <person name="Wilkie H."/>
            <person name="Makoff A."/>
        </authorList>
    </citation>
    <scope>NUCLEOTIDE SEQUENCE [GENOMIC DNA] OF 118-129</scope>
</reference>
<reference key="13">
    <citation type="journal article" date="2002" name="Proteomics">
        <title>Cluster analysis of an extensive human breast cancer cell line protein expression map database.</title>
        <authorList>
            <person name="Harris R.A."/>
            <person name="Yang A."/>
            <person name="Stein R.C."/>
            <person name="Lucy K."/>
            <person name="Brusten L."/>
            <person name="Herath A."/>
            <person name="Parekh R."/>
            <person name="Waterfield M.D."/>
            <person name="O'Hare M.J."/>
            <person name="Neville M.A."/>
            <person name="Page M.J."/>
            <person name="Zvelebil M.J."/>
        </authorList>
    </citation>
    <scope>MASS SPECTROMETRY</scope>
    <source>
        <tissue>Mammary cancer</tissue>
    </source>
</reference>
<reference key="14">
    <citation type="journal article" date="2003" name="Nature">
        <title>Nicotinic acetylcholine receptor alpha7 subunit is an essential regulator of inflammation.</title>
        <authorList>
            <person name="Wang H."/>
            <person name="Yu M."/>
            <person name="Ochani M."/>
            <person name="Amella C.A."/>
            <person name="Tanovic M."/>
            <person name="Susarla S."/>
            <person name="Li J.H."/>
            <person name="Wang H."/>
            <person name="Yang H."/>
            <person name="Ulloa L."/>
            <person name="Al-Abed Y."/>
            <person name="Czura C.J."/>
            <person name="Tracey K.J."/>
        </authorList>
    </citation>
    <scope>FUNCTION</scope>
    <scope>TISSUE SPECIFICITY</scope>
    <scope>ACTIVITY REGULATION</scope>
</reference>
<reference key="15">
    <citation type="journal article" date="2004" name="Biochemistry">
        <title>Alpha-conotoxins ImI and ImII target distinct regions of the human alpha7 nicotinic acetylcholine receptor and distinguish human nicotinic receptor subtypes.</title>
        <authorList>
            <person name="Ellison M."/>
            <person name="Gao F."/>
            <person name="Wang H.L."/>
            <person name="Sine S.M."/>
            <person name="McIntosh J.M."/>
            <person name="Olivera B.M."/>
        </authorList>
    </citation>
    <scope>MUTAGENESIS OF GLN-139</scope>
    <scope>ACTIVITY REGULATION</scope>
</reference>
<reference key="16">
    <citation type="journal article" date="2005" name="J. Biol. Chem.">
        <title>Ric-3 promotes functional expression of the nicotinic acetylcholine receptor alpha7 subunit in mammalian cells.</title>
        <authorList>
            <person name="Williams M.E."/>
            <person name="Burton B."/>
            <person name="Urrutia A."/>
            <person name="Shcherbatko A."/>
            <person name="Chavez-Noriega L.E."/>
            <person name="Cohen C.J."/>
            <person name="Aiyar J."/>
        </authorList>
    </citation>
    <scope>INTERACTION WITH RIC3</scope>
</reference>
<reference key="17">
    <citation type="journal article" date="2005" name="Mol. Pharmacol.">
        <title>RIC-3 enhances functional expression of multiple nicotinic acetylcholine receptor subtypes in mammalian cells.</title>
        <authorList>
            <person name="Lansdell S.J."/>
            <person name="Gee V.J."/>
            <person name="Harkness P.C."/>
            <person name="Doward A.I."/>
            <person name="Baker E.R."/>
            <person name="Gibb A.J."/>
            <person name="Millar N.S."/>
        </authorList>
    </citation>
    <scope>INTERACTION WITH RIC3</scope>
</reference>
<reference key="18">
    <citation type="journal article" date="2006" name="Clin. Exp. Immunol.">
        <title>Nicotine inhibits the production of proinflammatory mediators in human monocytes by suppression of I-kappaB phosphorylation and nuclear factor-kappaB transcriptional activity through nicotinic acetylcholine receptor alpha7.</title>
        <authorList>
            <person name="Yoshikawa H."/>
            <person name="Kurokawa M."/>
            <person name="Ozaki N."/>
            <person name="Nara K."/>
            <person name="Atou K."/>
            <person name="Takada E."/>
            <person name="Kamochi H."/>
            <person name="Suzuki N."/>
        </authorList>
    </citation>
    <scope>FUNCTION</scope>
    <scope>ACTIVITY REGULATION</scope>
    <scope>TISSUE SPECIFICITY</scope>
</reference>
<reference key="19">
    <citation type="journal article" date="2007" name="J. Immunol.">
        <title>T cells express alpha7-nicotinic acetylcholine receptor subunits that require a functional TCR and leukocyte-specific protein tyrosine kinase for nicotine-induced Ca2+ response.</title>
        <authorList>
            <person name="Razani-Boroujerdi S."/>
            <person name="Boyd R.T."/>
            <person name="Davila-Garcia M.I."/>
            <person name="Nandi J.S."/>
            <person name="Mishra N.C."/>
            <person name="Singh S.P."/>
            <person name="Pena-Philippides J.C."/>
            <person name="Langley R."/>
            <person name="Sopori M.L."/>
        </authorList>
    </citation>
    <scope>FUNCTION</scope>
    <scope>TISSUE SPECIFICITY</scope>
</reference>
<reference key="20">
    <citation type="journal article" date="2009" name="Neuropharmacology">
        <title>Diversity of vertebrate nicotinic acetylcholine receptors.</title>
        <authorList>
            <person name="Millar N.S."/>
            <person name="Gotti C."/>
        </authorList>
    </citation>
    <scope>REVIEW ON NACHRS DIVERSITY</scope>
</reference>
<reference key="21">
    <citation type="journal article" date="2014" name="PLoS ONE">
        <title>A new IRAK-M-mediated mechanism implicated in the anti-inflammatory effect of nicotine via alpha7 nicotinic receptors in human macrophages.</title>
        <authorList>
            <person name="Maldifassi M.C."/>
            <person name="Atienza G."/>
            <person name="Arnalich F."/>
            <person name="Lopez-Collazo E."/>
            <person name="Cedillo J.L."/>
            <person name="Martin-Sanchez C."/>
            <person name="Bordas A."/>
            <person name="Renart J."/>
            <person name="Montiel C."/>
        </authorList>
    </citation>
    <scope>FUNCTION</scope>
</reference>
<reference key="22">
    <citation type="journal article" date="2016" name="J. Neurochem.">
        <title>Functional interaction between Lypd6 and nicotinic acetylcholine receptors.</title>
        <authorList>
            <person name="Arvaniti M."/>
            <person name="Jensen M.M."/>
            <person name="Soni N."/>
            <person name="Wang H."/>
            <person name="Klein A.B."/>
            <person name="Thiriet N."/>
            <person name="Pinborg L.H."/>
            <person name="Muldoon P.P."/>
            <person name="Wienecke J."/>
            <person name="Imad Damaj M."/>
            <person name="Kohlmeier K.A."/>
            <person name="Gondre-Lewis M.C."/>
            <person name="Mikkelsen J.D."/>
            <person name="Thomsen M.S."/>
        </authorList>
    </citation>
    <scope>INTERACTION WITH LYPD6</scope>
</reference>
<reference key="23">
    <citation type="journal article" date="2017" name="SLAS Discovery">
        <title>A Genome-Wide Arrayed cDNA Screen to Identify Functional Modulators of alpha7 Nicotinic Acetylcholine Receptors.</title>
        <authorList>
            <person name="Rex E.B."/>
            <person name="Shukla N."/>
            <person name="Gu S."/>
            <person name="Bredt D."/>
            <person name="DiSepio D."/>
        </authorList>
    </citation>
    <scope>SUBCELLULAR LOCATION</scope>
</reference>
<reference key="24">
    <citation type="journal article" date="2020" name="Cell Rep.">
        <title>NACHO Engages N-Glycosylation ER Chaperone Pathways for alpha7 Nicotinic Receptor Assembly.</title>
        <authorList>
            <person name="Kweon H.J."/>
            <person name="Gu S."/>
            <person name="Witham E."/>
            <person name="Dhara M."/>
            <person name="Yu H."/>
            <person name="Mandon E.D."/>
            <person name="Jawhari A."/>
            <person name="Bredt D.S."/>
        </authorList>
    </citation>
    <scope>INTERACTION WITH CANX</scope>
</reference>
<reference key="25">
    <citation type="journal article" date="2019" name="Neuropharmacology">
        <title>Flavonoids as positive allosteric modulators of alpha7 nicotinic receptors.</title>
        <authorList>
            <person name="Nielsen B.E."/>
            <person name="Bermudez I."/>
            <person name="Bouzat C."/>
        </authorList>
    </citation>
    <scope>FUNCTION</scope>
    <scope>ACTIVITY REGULATION</scope>
</reference>
<reference key="26">
    <citation type="journal article" date="2021" name="J. Neurosci.">
        <title>Implications of Oligomeric Amyloid-Beta (oAbeta42) Signaling through alpha7beta2-Nicotinic Acetylcholine Receptors (nAChRs) on Basal Forebrain Cholinergic Neuronal Intrinsic Excitability and Cognitive Decline.</title>
        <authorList>
            <person name="George A.A."/>
            <person name="Vieira J.M."/>
            <person name="Xavier-Jackson C."/>
            <person name="Gee M.T."/>
            <person name="Cirrito J.R."/>
            <person name="Bimonte-Nelson H.A."/>
            <person name="Picciotto M.R."/>
            <person name="Lukas R.J."/>
            <person name="Whiteaker P."/>
        </authorList>
    </citation>
    <scope>FUNCTION</scope>
    <scope>ACTIVITY REGULATION</scope>
</reference>
<reference key="27">
    <citation type="journal article" date="2024" name="FASEB J.">
        <title>Analogs of alpha-conotoxin PnIC selectively inhibit alpha7beta2- over alpha7-only subtype nicotinic acetylcholine receptors via a novel allosteric mechanism.</title>
        <authorList>
            <person name="George A.A."/>
            <person name="John S.J."/>
            <person name="Lucero L.M."/>
            <person name="Eaton J.B."/>
            <person name="Jaiswal E."/>
            <person name="Christensen S.B."/>
            <person name="Gajewiak J."/>
            <person name="Watkins M."/>
            <person name="Cao Y."/>
            <person name="Olivera B.M."/>
            <person name="Im W."/>
            <person name="McIntosh J.M."/>
            <person name="Whiteaker P."/>
        </authorList>
    </citation>
    <scope>FUNCTION</scope>
    <scope>SUBUNIT</scope>
    <scope>ACTIVITY REGULATION</scope>
</reference>
<reference evidence="28 29 30" key="28">
    <citation type="journal article" date="2021" name="Cell">
        <title>Structure and gating mechanism of the alpha7 nicotinic acetylcholine receptor.</title>
        <authorList>
            <person name="Noviello C.M."/>
            <person name="Gharpure A."/>
            <person name="Mukhtasimova N."/>
            <person name="Cabuco R."/>
            <person name="Baxter L."/>
            <person name="Borek D."/>
            <person name="Sine S.M."/>
            <person name="Hibbs R.E."/>
        </authorList>
    </citation>
    <scope>STRUCTURE BY ELECTRON MICROSCOPY (2.70 ANGSTROMS) OF 24-371 AND 407-502 IN COMPLEX WITH CA(2+); LIGAND AND ALLOSTERIC MODULATORS</scope>
    <scope>FUNCTION</scope>
    <scope>SUBUNIT</scope>
    <scope>ACTIVITY REGULATION</scope>
    <scope>MUTAGENESIS OF GLU-120; TRP-156; ARG-227; ALA-490; PRO-491 AND ASP-500</scope>
</reference>
<reference evidence="31 32 33 35 36 37 38 39 40 41" key="29">
    <citation type="journal article" date="2024" name="Cell">
        <title>Structural mechanisms of alpha7 nicotinic receptor allosteric modulation and activation.</title>
        <authorList>
            <person name="Burke S.M."/>
            <person name="Avstrikova M."/>
            <person name="Noviello C.M."/>
            <person name="Mukhtasimova N."/>
            <person name="Changeux J.P."/>
            <person name="Thakur G.A."/>
            <person name="Sine S.M."/>
            <person name="Cecchini M."/>
            <person name="Hibbs R.E."/>
        </authorList>
    </citation>
    <scope>STRUCTURE BY ELECTRON MICROSCOPY (2.19 ANGSTROMS) OF 24-373 AND 413-502 IN COMPLEX WITH CA(2+); LIGAND AND ALLOSTERIC MODULATORS</scope>
    <scope>FUNCTION</scope>
    <scope>SUBUNIT</scope>
    <scope>ACTIVITY REGULATION</scope>
</reference>
<organism>
    <name type="scientific">Homo sapiens</name>
    <name type="common">Human</name>
    <dbReference type="NCBI Taxonomy" id="9606"/>
    <lineage>
        <taxon>Eukaryota</taxon>
        <taxon>Metazoa</taxon>
        <taxon>Chordata</taxon>
        <taxon>Craniata</taxon>
        <taxon>Vertebrata</taxon>
        <taxon>Euteleostomi</taxon>
        <taxon>Mammalia</taxon>
        <taxon>Eutheria</taxon>
        <taxon>Euarchontoglires</taxon>
        <taxon>Primates</taxon>
        <taxon>Haplorrhini</taxon>
        <taxon>Catarrhini</taxon>
        <taxon>Hominidae</taxon>
        <taxon>Homo</taxon>
    </lineage>
</organism>
<name>ACHA7_HUMAN</name>
<keyword id="KW-0002">3D-structure</keyword>
<keyword id="KW-0025">Alternative splicing</keyword>
<keyword id="KW-1003">Cell membrane</keyword>
<keyword id="KW-1015">Disulfide bond</keyword>
<keyword id="KW-0325">Glycoprotein</keyword>
<keyword id="KW-0407">Ion channel</keyword>
<keyword id="KW-0406">Ion transport</keyword>
<keyword id="KW-1071">Ligand-gated ion channel</keyword>
<keyword id="KW-0472">Membrane</keyword>
<keyword id="KW-0628">Postsynaptic cell membrane</keyword>
<keyword id="KW-0675">Receptor</keyword>
<keyword id="KW-1185">Reference proteome</keyword>
<keyword id="KW-0732">Signal</keyword>
<keyword id="KW-0770">Synapse</keyword>
<keyword id="KW-0812">Transmembrane</keyword>
<keyword id="KW-1133">Transmembrane helix</keyword>
<keyword id="KW-0813">Transport</keyword>
<protein>
    <recommendedName>
        <fullName>Neuronal acetylcholine receptor subunit alpha-7</fullName>
        <shortName>nAChR7</shortName>
    </recommendedName>
    <alternativeName>
        <fullName>Nicotinic acetylcholine receptor subunit alpha-7</fullName>
    </alternativeName>
</protein>
<accession>P36544</accession>
<accession>A8K7Q4</accession>
<accession>B4DFS0</accession>
<accession>Q15826</accession>
<accession>Q8IUZ4</accession>
<accession>Q96RH2</accession>
<accession>Q99555</accession>
<accession>Q9BXH0</accession>
<comment type="function">
    <text evidence="4 7 9 11 12 13 16 18 19 21 22 26">Component of neuronal acetylcholine receptors (nAChRs) that function as pentameric, ligand-gated cation channels with high calcium permeability among other activities. nAChRs are excitatory neurotrasnmitter receptors formed by a collection of nAChR subunits known to mediate synaptic transmission in the nervous system and the neuromuscular junction. Each nAchR subunit confers differential attributes to channel properties, including activation, deactivation and desensitization kinetics, pH sensitivity, cation permeability, and binding to allosteric modulators (PubMed:15609996, PubMed:33735609, PubMed:8145738). CHRNA7 forms homopentameric neuronal acetylcholine receptors abundantly expressed in the central nervous system, characterized by fast desensitization and high calcium permeability (PubMed:31560909, PubMed:33735609, PubMed:38382524, PubMed:8145738). Also forms heteropentamers with CHRNB2, mainly expressed in basal forebrain cholinergic neurons. Involved in the modulation of calcium-dependent signaling pathways and influences the release of neurotransmitters, including dopamine, glutamate and GABA (PubMed:33239400). Also expressed in non-neuronal cells such as immune cells like lymphocytes, monocytes and macrophages (PubMed:12508119, PubMed:16968406, PubMed:25259522). In T cells, activation induces metabotropic signaling that results in an increase of intracellular Ca2+ concentrations, independent of ionotropic receptor functions (PubMed:17709503). In macrophages, required for acetylcholine-mediated inhibition of TNF and other inflammatory cytokine release (PubMed:12508119). Once activated by acetylcholine, nicotine or other agonists, selectively inhibits production of pro-inflammatory cytokines while leaving anti-inflammatory cytokines undisturbed (PubMed:12508119, PubMed:25259522). Stimulates the cholinergic anti-inflammatory pathway, controlling inflammation by inhibiting NFKB nuclear translocation and activating the JAK2-STAT3 pathway, independently of ion channel activity (PubMed:16968406, PubMed:25259522). Also expressed in the urothelium where it modulates reflex bladder activity by increasing intracellular calcium through internal stores and decreasing basal ATP release (By similarity).</text>
</comment>
<comment type="catalytic activity">
    <reaction evidence="19 22">
        <text>Ca(2+)(in) = Ca(2+)(out)</text>
        <dbReference type="Rhea" id="RHEA:29671"/>
        <dbReference type="ChEBI" id="CHEBI:29108"/>
    </reaction>
</comment>
<comment type="catalytic activity">
    <reaction evidence="19">
        <text>K(+)(in) = K(+)(out)</text>
        <dbReference type="Rhea" id="RHEA:29463"/>
        <dbReference type="ChEBI" id="CHEBI:29103"/>
    </reaction>
</comment>
<comment type="catalytic activity">
    <reaction evidence="1">
        <text>Na(+)(in) = Na(+)(out)</text>
        <dbReference type="Rhea" id="RHEA:34963"/>
        <dbReference type="ChEBI" id="CHEBI:29101"/>
    </reaction>
</comment>
<comment type="catalytic activity">
    <reaction evidence="19">
        <text>choline(out) = choline(in)</text>
        <dbReference type="Rhea" id="RHEA:32751"/>
        <dbReference type="ChEBI" id="CHEBI:15354"/>
    </reaction>
</comment>
<comment type="catalytic activity">
    <reaction evidence="19">
        <text>NH4(+)(in) = NH4(+)(out)</text>
        <dbReference type="Rhea" id="RHEA:28747"/>
        <dbReference type="ChEBI" id="CHEBI:28938"/>
    </reaction>
</comment>
<comment type="catalytic activity">
    <reaction evidence="19">
        <text>L-arginine(in) = L-arginine(out)</text>
        <dbReference type="Rhea" id="RHEA:32143"/>
        <dbReference type="ChEBI" id="CHEBI:32682"/>
    </reaction>
</comment>
<comment type="catalytic activity">
    <reaction evidence="19">
        <text>guanidine(out) = guanidine(in)</text>
        <dbReference type="Rhea" id="RHEA:73883"/>
        <dbReference type="ChEBI" id="CHEBI:30087"/>
    </reaction>
</comment>
<comment type="activity regulation">
    <text evidence="7 9 11 16 18 19 20 21 22">Activated by a myriad of ligands such as acetylcholine, cytisine, nicotine, choline and epibatidine (PubMed:12508119, PubMed:16968406, PubMed:33735609, PubMed:38382524, PubMed:8145738). Oligomeric amyloid-beta protein 42 activates specifially CHRNA7:CHRNB2 nAchRs (PubMed:33239400). Activity is modulated by positive allosteric modulators (PAMs), such as flavonoids, with a wide range of chemical diversity, pharmacological sensitivity and efficacy (PubMed:31560909, PubMed:38382524). AChR activity is inhibited by the antagonists alpha-conotoxons RgIA, ImI and ImII, small disulfide-constrained peptides from cone snails (PubMed:15609996). Alpha-conotoxin PnIC selectively inhibits CHRNA7:CHRNB2 over CHRNA7 homopentamer (PubMed:38161283).</text>
</comment>
<comment type="subunit">
    <text evidence="3 4 8 9 10 14 17 18 19 20 21">Homopentamer (PubMed:33735609, PubMed:38382524). Can also form heteropentamers with CHRNB2, mainly found in basal forebrain cholinergic neurons (PubMed:33239400, PubMed:38161283). Interacts with RIC3; which is required for proper folding and assembly (PubMed:15504725, PubMed:16120769). Interacts with LYPD6 (PubMed:27344019). Interacts with CANX (PubMed:32783947).</text>
</comment>
<comment type="interaction">
    <interactant intactId="EBI-79333">
        <id>P36544</id>
    </interactant>
    <interactant intactId="EBI-77613">
        <id>P05067</id>
        <label>APP</label>
    </interactant>
    <organismsDiffer>false</organismsDiffer>
    <experiments>4</experiments>
</comment>
<comment type="interaction">
    <interactant intactId="EBI-79333">
        <id>P36544</id>
    </interactant>
    <interactant intactId="EBI-821758">
        <id>PRO_0000000092</id>
        <label>APP</label>
        <dbReference type="UniProtKB" id="P05067"/>
    </interactant>
    <organismsDiffer>false</organismsDiffer>
    <experiments>7</experiments>
</comment>
<comment type="interaction">
    <interactant intactId="EBI-79333">
        <id>P36544</id>
    </interactant>
    <interactant intactId="EBI-10693038">
        <id>Q9NSI6-4</id>
        <label>BRWD1</label>
    </interactant>
    <organismsDiffer>false</organismsDiffer>
    <experiments>3</experiments>
</comment>
<comment type="interaction">
    <interactant intactId="EBI-79333">
        <id>P36544</id>
    </interactant>
    <interactant intactId="EBI-20798208">
        <id>Q494W8</id>
        <label>CHRFAM7A</label>
    </interactant>
    <organismsDiffer>false</organismsDiffer>
    <experiments>3</experiments>
</comment>
<comment type="interaction">
    <interactant intactId="EBI-79333">
        <id>P36544</id>
    </interactant>
    <interactant intactId="EBI-372690">
        <id>Q9UBU7</id>
        <label>DBF4</label>
    </interactant>
    <organismsDiffer>false</organismsDiffer>
    <experiments>3</experiments>
</comment>
<comment type="interaction">
    <interactant intactId="EBI-79333">
        <id>P36544</id>
    </interactant>
    <interactant intactId="EBI-12382151">
        <id>Q8N5J2-3</id>
        <label>MINDY1</label>
    </interactant>
    <organismsDiffer>false</organismsDiffer>
    <experiments>3</experiments>
</comment>
<comment type="interaction">
    <interactant intactId="EBI-79333">
        <id>P36544</id>
    </interactant>
    <interactant intactId="EBI-620823">
        <id>Q09028</id>
        <label>RBBP4</label>
    </interactant>
    <organismsDiffer>false</organismsDiffer>
    <experiments>3</experiments>
</comment>
<comment type="interaction">
    <interactant intactId="EBI-79333">
        <id>P36544</id>
    </interactant>
    <interactant intactId="EBI-8830896">
        <id>P55000</id>
        <label>SLURP1</label>
    </interactant>
    <organismsDiffer>false</organismsDiffer>
    <experiments>2</experiments>
</comment>
<comment type="interaction">
    <interactant intactId="EBI-79333">
        <id>P36544</id>
    </interactant>
    <interactant intactId="EBI-632715">
        <id>Q13573</id>
        <label>SNW1</label>
    </interactant>
    <organismsDiffer>false</organismsDiffer>
    <experiments>3</experiments>
</comment>
<comment type="subcellular location">
    <subcellularLocation>
        <location evidence="4">Postsynaptic cell membrane</location>
        <topology evidence="5">Multi-pass membrane protein</topology>
    </subcellularLocation>
    <subcellularLocation>
        <location evidence="15">Cell membrane</location>
        <topology evidence="5">Multi-pass membrane protein</topology>
    </subcellularLocation>
    <text evidence="4 15">TMEM35A/NACHO promotes its trafficking to the cell membrane (PubMed:27789755). RIC3 promotes its trafficking to the cell membrane (By similarity).</text>
</comment>
<comment type="alternative products">
    <event type="alternative splicing"/>
    <isoform>
        <id>P36544-1</id>
        <name>1</name>
        <sequence type="displayed"/>
    </isoform>
    <isoform>
        <id>P36544-2</id>
        <name>2</name>
        <sequence type="described" ref="VSP_043019"/>
    </isoform>
    <isoform>
        <id>P36544-3</id>
        <name>3</name>
        <sequence type="described" ref="VSP_058107 VSP_058108"/>
    </isoform>
</comment>
<comment type="tissue specificity">
    <text evidence="7 22">Expressed in neuronal cells (PubMed:8145738). Expressed in macrophages (at protein level) (PubMed:12508119).</text>
</comment>
<comment type="PTM">
    <text evidence="2">Glycosylations at Asn-46, Asn-90 and Asn-133 are essential for TMEM35A/NACHO-mediated proper subunit assembly and trafficking to the cell membrane.</text>
</comment>
<comment type="mass spectrometry"/>
<comment type="miscellaneous">
    <molecule>Isoform 3</molecule>
    <text evidence="25">May be produced at very low levels due to a premature stop codon in the mRNA, leading to nonsense-mediated mRNA decay.</text>
</comment>
<comment type="similarity">
    <text evidence="25">Belongs to the ligand-gated ion channel (TC 1.A.9) family. Acetylcholine receptor (TC 1.A.9.1) subfamily. Alpha-7/CHRNA7 sub-subfamily.</text>
</comment>
<comment type="sequence caution" evidence="25">
    <conflict type="erroneous translation">
        <sequence resource="EMBL-CDS" id="AAH37571"/>
    </conflict>
    <text>Wrong choice of frame.</text>
</comment>
<evidence type="ECO:0000250" key="1">
    <source>
        <dbReference type="UniProtKB" id="P02709"/>
    </source>
</evidence>
<evidence type="ECO:0000250" key="2">
    <source>
        <dbReference type="UniProtKB" id="P49582"/>
    </source>
</evidence>
<evidence type="ECO:0000250" key="3">
    <source>
        <dbReference type="UniProtKB" id="P54131"/>
    </source>
</evidence>
<evidence type="ECO:0000250" key="4">
    <source>
        <dbReference type="UniProtKB" id="Q05941"/>
    </source>
</evidence>
<evidence type="ECO:0000255" key="5"/>
<evidence type="ECO:0000269" key="6">
    <source>
    </source>
</evidence>
<evidence type="ECO:0000269" key="7">
    <source>
    </source>
</evidence>
<evidence type="ECO:0000269" key="8">
    <source>
    </source>
</evidence>
<evidence type="ECO:0000269" key="9">
    <source>
    </source>
</evidence>
<evidence type="ECO:0000269" key="10">
    <source>
    </source>
</evidence>
<evidence type="ECO:0000269" key="11">
    <source>
    </source>
</evidence>
<evidence type="ECO:0000269" key="12">
    <source>
    </source>
</evidence>
<evidence type="ECO:0000269" key="13">
    <source>
    </source>
</evidence>
<evidence type="ECO:0000269" key="14">
    <source>
    </source>
</evidence>
<evidence type="ECO:0000269" key="15">
    <source>
    </source>
</evidence>
<evidence type="ECO:0000269" key="16">
    <source>
    </source>
</evidence>
<evidence type="ECO:0000269" key="17">
    <source>
    </source>
</evidence>
<evidence type="ECO:0000269" key="18">
    <source>
    </source>
</evidence>
<evidence type="ECO:0000269" key="19">
    <source>
    </source>
</evidence>
<evidence type="ECO:0000269" key="20">
    <source>
    </source>
</evidence>
<evidence type="ECO:0000269" key="21">
    <source>
    </source>
</evidence>
<evidence type="ECO:0000269" key="22">
    <source>
    </source>
</evidence>
<evidence type="ECO:0000303" key="23">
    <source>
    </source>
</evidence>
<evidence type="ECO:0000303" key="24">
    <source>
    </source>
</evidence>
<evidence type="ECO:0000305" key="25"/>
<evidence type="ECO:0000305" key="26">
    <source>
    </source>
</evidence>
<evidence type="ECO:0000312" key="27">
    <source>
        <dbReference type="HGNC" id="HGNC:1960"/>
    </source>
</evidence>
<evidence type="ECO:0007744" key="28">
    <source>
        <dbReference type="PDB" id="7KOO"/>
    </source>
</evidence>
<evidence type="ECO:0007744" key="29">
    <source>
        <dbReference type="PDB" id="7KOQ"/>
    </source>
</evidence>
<evidence type="ECO:0007744" key="30">
    <source>
        <dbReference type="PDB" id="7KOX"/>
    </source>
</evidence>
<evidence type="ECO:0007744" key="31">
    <source>
        <dbReference type="PDB" id="8UT1"/>
    </source>
</evidence>
<evidence type="ECO:0007744" key="32">
    <source>
        <dbReference type="PDB" id="8UTB"/>
    </source>
</evidence>
<evidence type="ECO:0007744" key="33">
    <source>
        <dbReference type="PDB" id="8UZJ"/>
    </source>
</evidence>
<evidence type="ECO:0007744" key="34">
    <source>
        <dbReference type="PDB" id="8V80"/>
    </source>
</evidence>
<evidence type="ECO:0007744" key="35">
    <source>
        <dbReference type="PDB" id="8V82"/>
    </source>
</evidence>
<evidence type="ECO:0007744" key="36">
    <source>
        <dbReference type="PDB" id="8V86"/>
    </source>
</evidence>
<evidence type="ECO:0007744" key="37">
    <source>
        <dbReference type="PDB" id="8V88"/>
    </source>
</evidence>
<evidence type="ECO:0007744" key="38">
    <source>
        <dbReference type="PDB" id="8V89"/>
    </source>
</evidence>
<evidence type="ECO:0007744" key="39">
    <source>
        <dbReference type="PDB" id="8V8A"/>
    </source>
</evidence>
<evidence type="ECO:0007744" key="40">
    <source>
        <dbReference type="PDB" id="8V8C"/>
    </source>
</evidence>
<evidence type="ECO:0007744" key="41">
    <source>
        <dbReference type="PDB" id="8V8D"/>
    </source>
</evidence>
<evidence type="ECO:0007829" key="42">
    <source>
        <dbReference type="PDB" id="5AFM"/>
    </source>
</evidence>
<evidence type="ECO:0007829" key="43">
    <source>
        <dbReference type="PDB" id="5AFN"/>
    </source>
</evidence>
<evidence type="ECO:0007829" key="44">
    <source>
        <dbReference type="PDB" id="7EKI"/>
    </source>
</evidence>
<evidence type="ECO:0007829" key="45">
    <source>
        <dbReference type="PDB" id="7RPM"/>
    </source>
</evidence>
<evidence type="ECO:0007829" key="46">
    <source>
        <dbReference type="PDB" id="8C9X"/>
    </source>
</evidence>
<evidence type="ECO:0007829" key="47">
    <source>
        <dbReference type="PDB" id="8CE4"/>
    </source>
</evidence>
<evidence type="ECO:0007829" key="48">
    <source>
        <dbReference type="PDB" id="8F4V"/>
    </source>
</evidence>
<evidence type="ECO:0007829" key="49">
    <source>
        <dbReference type="PDB" id="8UTB"/>
    </source>
</evidence>
<evidence type="ECO:0007829" key="50">
    <source>
        <dbReference type="PDB" id="8UZJ"/>
    </source>
</evidence>
<evidence type="ECO:0007829" key="51">
    <source>
        <dbReference type="PDB" id="8V89"/>
    </source>
</evidence>
<evidence type="ECO:0007829" key="52">
    <source>
        <dbReference type="PDB" id="8V8A"/>
    </source>
</evidence>
<dbReference type="EMBL" id="X70297">
    <property type="protein sequence ID" value="CAA49778.1"/>
    <property type="molecule type" value="mRNA"/>
</dbReference>
<dbReference type="EMBL" id="U40583">
    <property type="protein sequence ID" value="AAA83561.2"/>
    <property type="molecule type" value="mRNA"/>
</dbReference>
<dbReference type="EMBL" id="U62436">
    <property type="protein sequence ID" value="AAB40114.1"/>
    <property type="molecule type" value="mRNA"/>
</dbReference>
<dbReference type="EMBL" id="Y08420">
    <property type="protein sequence ID" value="CAA69697.1"/>
    <property type="molecule type" value="mRNA"/>
</dbReference>
<dbReference type="EMBL" id="AF385585">
    <property type="protein sequence ID" value="AAK68111.1"/>
    <property type="molecule type" value="mRNA"/>
</dbReference>
<dbReference type="EMBL" id="AK292069">
    <property type="protein sequence ID" value="BAF84758.1"/>
    <property type="molecule type" value="mRNA"/>
</dbReference>
<dbReference type="EMBL" id="AK294229">
    <property type="protein sequence ID" value="BAG57531.1"/>
    <property type="molecule type" value="mRNA"/>
</dbReference>
<dbReference type="EMBL" id="AC004460">
    <property type="status" value="NOT_ANNOTATED_CDS"/>
    <property type="molecule type" value="Genomic_DNA"/>
</dbReference>
<dbReference type="EMBL" id="AC009562">
    <property type="status" value="NOT_ANNOTATED_CDS"/>
    <property type="molecule type" value="Genomic_DNA"/>
</dbReference>
<dbReference type="EMBL" id="AC012236">
    <property type="status" value="NOT_ANNOTATED_CDS"/>
    <property type="molecule type" value="Genomic_DNA"/>
</dbReference>
<dbReference type="EMBL" id="AC021316">
    <property type="status" value="NOT_ANNOTATED_CDS"/>
    <property type="molecule type" value="Genomic_DNA"/>
</dbReference>
<dbReference type="EMBL" id="AC026150">
    <property type="status" value="NOT_ANNOTATED_CDS"/>
    <property type="molecule type" value="Genomic_DNA"/>
</dbReference>
<dbReference type="EMBL" id="AC026951">
    <property type="status" value="NOT_ANNOTATED_CDS"/>
    <property type="molecule type" value="Genomic_DNA"/>
</dbReference>
<dbReference type="EMBL" id="AC058803">
    <property type="status" value="NOT_ANNOTATED_CDS"/>
    <property type="molecule type" value="Genomic_DNA"/>
</dbReference>
<dbReference type="EMBL" id="AC068448">
    <property type="status" value="NOT_ANNOTATED_CDS"/>
    <property type="molecule type" value="Genomic_DNA"/>
</dbReference>
<dbReference type="EMBL" id="AC079969">
    <property type="status" value="NOT_ANNOTATED_CDS"/>
    <property type="molecule type" value="Genomic_DNA"/>
</dbReference>
<dbReference type="EMBL" id="AC087481">
    <property type="status" value="NOT_ANNOTATED_CDS"/>
    <property type="molecule type" value="Genomic_DNA"/>
</dbReference>
<dbReference type="EMBL" id="AC090829">
    <property type="status" value="NOT_ANNOTATED_CDS"/>
    <property type="molecule type" value="Genomic_DNA"/>
</dbReference>
<dbReference type="EMBL" id="AC091057">
    <property type="status" value="NOT_ANNOTATED_CDS"/>
    <property type="molecule type" value="Genomic_DNA"/>
</dbReference>
<dbReference type="EMBL" id="AC104266">
    <property type="status" value="NOT_ANNOTATED_CDS"/>
    <property type="molecule type" value="Genomic_DNA"/>
</dbReference>
<dbReference type="EMBL" id="AC104759">
    <property type="status" value="NOT_ANNOTATED_CDS"/>
    <property type="molecule type" value="Genomic_DNA"/>
</dbReference>
<dbReference type="EMBL" id="BC037571">
    <property type="protein sequence ID" value="AAH37571.1"/>
    <property type="status" value="ALT_SEQ"/>
    <property type="molecule type" value="mRNA"/>
</dbReference>
<dbReference type="EMBL" id="BC101345">
    <property type="protein sequence ID" value="AAI01346.1"/>
    <property type="molecule type" value="mRNA"/>
</dbReference>
<dbReference type="EMBL" id="L25827">
    <property type="status" value="NOT_ANNOTATED_CDS"/>
    <property type="molecule type" value="mRNA"/>
</dbReference>
<dbReference type="EMBL" id="Z23141">
    <property type="protein sequence ID" value="CAA80672.1"/>
    <property type="molecule type" value="mRNA"/>
</dbReference>
<dbReference type="EMBL" id="AF332758">
    <property type="protein sequence ID" value="AAK19515.1"/>
    <property type="molecule type" value="Genomic_DNA"/>
</dbReference>
<dbReference type="CCDS" id="CCDS10027.1">
    <molecule id="P36544-1"/>
</dbReference>
<dbReference type="CCDS" id="CCDS53924.1">
    <molecule id="P36544-2"/>
</dbReference>
<dbReference type="PIR" id="G02259">
    <property type="entry name" value="G02259"/>
</dbReference>
<dbReference type="PIR" id="I37185">
    <property type="entry name" value="ACHUA7"/>
</dbReference>
<dbReference type="RefSeq" id="NP_000737.1">
    <molecule id="P36544-1"/>
    <property type="nucleotide sequence ID" value="NM_000746.6"/>
</dbReference>
<dbReference type="RefSeq" id="NP_001177384.1">
    <molecule id="P36544-2"/>
    <property type="nucleotide sequence ID" value="NM_001190455.3"/>
</dbReference>
<dbReference type="RefSeq" id="NP_683709.1">
    <property type="nucleotide sequence ID" value="NM_148911.1"/>
</dbReference>
<dbReference type="RefSeq" id="XP_005254807.1">
    <property type="nucleotide sequence ID" value="XM_005254750.2"/>
</dbReference>
<dbReference type="RefSeq" id="XP_016877373.1">
    <property type="nucleotide sequence ID" value="XM_017021884.1"/>
</dbReference>
<dbReference type="PDB" id="2MAW">
    <property type="method" value="NMR"/>
    <property type="chains" value="A=228-326, A=467-495"/>
</dbReference>
<dbReference type="PDB" id="5AFH">
    <property type="method" value="X-ray"/>
    <property type="resolution" value="2.40 A"/>
    <property type="chains" value="A/B/C/D/E=23-227"/>
</dbReference>
<dbReference type="PDB" id="5AFJ">
    <property type="method" value="X-ray"/>
    <property type="resolution" value="2.20 A"/>
    <property type="chains" value="A/B/C/D/E=23-227"/>
</dbReference>
<dbReference type="PDB" id="5AFK">
    <property type="method" value="X-ray"/>
    <property type="resolution" value="2.38 A"/>
    <property type="chains" value="A/B/C/D/E=23-227"/>
</dbReference>
<dbReference type="PDB" id="5AFL">
    <property type="method" value="X-ray"/>
    <property type="resolution" value="2.38 A"/>
    <property type="chains" value="A/B/C/D/E=23-227"/>
</dbReference>
<dbReference type="PDB" id="5AFM">
    <property type="method" value="X-ray"/>
    <property type="resolution" value="2.85 A"/>
    <property type="chains" value="A/B/C/D/E=23-227"/>
</dbReference>
<dbReference type="PDB" id="5AFN">
    <property type="method" value="X-ray"/>
    <property type="resolution" value="2.15 A"/>
    <property type="chains" value="A/B/C/D/E=23-227"/>
</dbReference>
<dbReference type="PDB" id="7EKI">
    <property type="method" value="EM"/>
    <property type="resolution" value="3.18 A"/>
    <property type="chains" value="A/B/C/D/E=1-502"/>
</dbReference>
<dbReference type="PDB" id="7EKP">
    <property type="method" value="EM"/>
    <property type="resolution" value="2.85 A"/>
    <property type="chains" value="A/B/C/D/E=1-502"/>
</dbReference>
<dbReference type="PDB" id="7EKT">
    <property type="method" value="EM"/>
    <property type="resolution" value="3.02 A"/>
    <property type="chains" value="A/B/C/D/E=1-502"/>
</dbReference>
<dbReference type="PDB" id="7KOO">
    <property type="method" value="EM"/>
    <property type="resolution" value="3.00 A"/>
    <property type="chains" value="A/B/C/D/E=24-371, A/B/C/D/E=407-502"/>
</dbReference>
<dbReference type="PDB" id="7KOQ">
    <property type="method" value="EM"/>
    <property type="resolution" value="3.60 A"/>
    <property type="chains" value="A/B/C/D/E=24-371, A/B/C/D/E=407-502"/>
</dbReference>
<dbReference type="PDB" id="7KOX">
    <property type="method" value="EM"/>
    <property type="resolution" value="2.70 A"/>
    <property type="chains" value="A/B/C/D/E=24-371, A/B/C/D/E=407-502"/>
</dbReference>
<dbReference type="PDB" id="7RPM">
    <property type="method" value="NMR"/>
    <property type="chains" value="A/B/C/D/E=231-496"/>
</dbReference>
<dbReference type="PDB" id="8C9X">
    <property type="method" value="EM"/>
    <property type="resolution" value="2.30 A"/>
    <property type="chains" value="A/B/C/D/E=24-347, A/B/C/D/E=455-502"/>
</dbReference>
<dbReference type="PDB" id="8CAU">
    <property type="method" value="EM"/>
    <property type="resolution" value="3.40 A"/>
    <property type="chains" value="A/B/C/D/E=24-502"/>
</dbReference>
<dbReference type="PDB" id="8CE4">
    <property type="method" value="EM"/>
    <property type="resolution" value="2.70 A"/>
    <property type="chains" value="A/B/C/D/E=24-347, A/B/C/D/E=455-502"/>
</dbReference>
<dbReference type="PDB" id="8CI1">
    <property type="method" value="EM"/>
    <property type="resolution" value="2.80 A"/>
    <property type="chains" value="A/B/C/D/E=24-347, A/B/C/D/E=455-502"/>
</dbReference>
<dbReference type="PDB" id="8CI2">
    <property type="method" value="EM"/>
    <property type="resolution" value="4.40 A"/>
    <property type="chains" value="A/B/C/D/E=24-347, A/B/C/D/E=455-502"/>
</dbReference>
<dbReference type="PDB" id="8F4V">
    <property type="method" value="NMR"/>
    <property type="chains" value="A/B/C/D/E=231-496"/>
</dbReference>
<dbReference type="PDB" id="8P1H">
    <property type="method" value="X-ray"/>
    <property type="resolution" value="1.95 A"/>
    <property type="chains" value="A/B=361-372"/>
</dbReference>
<dbReference type="PDB" id="8UT1">
    <property type="method" value="EM"/>
    <property type="resolution" value="2.30 A"/>
    <property type="chains" value="A/B/C/D/E=24-373, A/B/C/D/E=413-502"/>
</dbReference>
<dbReference type="PDB" id="8UTB">
    <property type="method" value="EM"/>
    <property type="resolution" value="2.30 A"/>
    <property type="chains" value="A/B/C/D/E=24-373, A/B/C/D/E=413-502"/>
</dbReference>
<dbReference type="PDB" id="8UZJ">
    <property type="method" value="EM"/>
    <property type="resolution" value="2.30 A"/>
    <property type="chains" value="A/B/C/D/E=24-373, A/B/C/D/E=413-502"/>
</dbReference>
<dbReference type="PDB" id="8V80">
    <property type="method" value="EM"/>
    <property type="resolution" value="2.34 A"/>
    <property type="chains" value="A/B/C/D/E=24-373, A/B/C/D/E=413-502"/>
</dbReference>
<dbReference type="PDB" id="8V82">
    <property type="method" value="EM"/>
    <property type="resolution" value="2.61 A"/>
    <property type="chains" value="A/B/C/D/E=24-373, A/B/C/D/E=413-502"/>
</dbReference>
<dbReference type="PDB" id="8V86">
    <property type="method" value="EM"/>
    <property type="resolution" value="2.47 A"/>
    <property type="chains" value="A/B/C/D/E=24-373, A/B/C/D/E=413-502"/>
</dbReference>
<dbReference type="PDB" id="8V88">
    <property type="method" value="EM"/>
    <property type="resolution" value="2.30 A"/>
    <property type="chains" value="A/B/C/D/E=24-373, A/B/C/D/E=413-502"/>
</dbReference>
<dbReference type="PDB" id="8V89">
    <property type="method" value="EM"/>
    <property type="resolution" value="2.53 A"/>
    <property type="chains" value="A/B/C/D/E=24-373, A/B/C/D/E=413-502"/>
</dbReference>
<dbReference type="PDB" id="8V8A">
    <property type="method" value="EM"/>
    <property type="resolution" value="2.19 A"/>
    <property type="chains" value="A/B/C/D/E=24-373, A/B/C/D/E=413-502"/>
</dbReference>
<dbReference type="PDB" id="8V8C">
    <property type="method" value="EM"/>
    <property type="resolution" value="3.29 A"/>
    <property type="chains" value="A/B/C/D/E=24-373, A/B/C/D/E=413-502"/>
</dbReference>
<dbReference type="PDB" id="8V8D">
    <property type="method" value="EM"/>
    <property type="resolution" value="3.31 A"/>
    <property type="chains" value="A/B/C/D/E=24-373, A/B/C/D/E=413-502"/>
</dbReference>
<dbReference type="PDBsum" id="2MAW"/>
<dbReference type="PDBsum" id="5AFH"/>
<dbReference type="PDBsum" id="5AFJ"/>
<dbReference type="PDBsum" id="5AFK"/>
<dbReference type="PDBsum" id="5AFL"/>
<dbReference type="PDBsum" id="5AFM"/>
<dbReference type="PDBsum" id="5AFN"/>
<dbReference type="PDBsum" id="7EKI"/>
<dbReference type="PDBsum" id="7EKP"/>
<dbReference type="PDBsum" id="7EKT"/>
<dbReference type="PDBsum" id="7KOO"/>
<dbReference type="PDBsum" id="7KOQ"/>
<dbReference type="PDBsum" id="7KOX"/>
<dbReference type="PDBsum" id="7RPM"/>
<dbReference type="PDBsum" id="8C9X"/>
<dbReference type="PDBsum" id="8CAU"/>
<dbReference type="PDBsum" id="8CE4"/>
<dbReference type="PDBsum" id="8CI1"/>
<dbReference type="PDBsum" id="8CI2"/>
<dbReference type="PDBsum" id="8F4V"/>
<dbReference type="PDBsum" id="8P1H"/>
<dbReference type="PDBsum" id="8UT1"/>
<dbReference type="PDBsum" id="8UTB"/>
<dbReference type="PDBsum" id="8UZJ"/>
<dbReference type="PDBsum" id="8V80"/>
<dbReference type="PDBsum" id="8V82"/>
<dbReference type="PDBsum" id="8V86"/>
<dbReference type="PDBsum" id="8V88"/>
<dbReference type="PDBsum" id="8V89"/>
<dbReference type="PDBsum" id="8V8A"/>
<dbReference type="PDBsum" id="8V8C"/>
<dbReference type="PDBsum" id="8V8D"/>
<dbReference type="EMDB" id="EMD-16513"/>
<dbReference type="EMDB" id="EMD-16534"/>
<dbReference type="EMDB" id="EMD-16598"/>
<dbReference type="EMDB" id="EMD-16665"/>
<dbReference type="EMDB" id="EMD-16666"/>
<dbReference type="EMDB" id="EMD-22979"/>
<dbReference type="EMDB" id="EMD-22980"/>
<dbReference type="EMDB" id="EMD-22983"/>
<dbReference type="EMDB" id="EMD-31168"/>
<dbReference type="EMDB" id="EMD-31172"/>
<dbReference type="EMDB" id="EMD-31176"/>
<dbReference type="EMDB" id="EMD-43012"/>
<dbReference type="EMDB" id="EMD-43015"/>
<dbReference type="EMDB" id="EMD-43025"/>
<dbReference type="EMDB" id="EMD-43030"/>
<dbReference type="EMDB" id="EMD-43031"/>
<dbReference type="EMDB" id="EMD-43032"/>
<dbReference type="EMDB" id="EMD-43035"/>
<dbReference type="SMR" id="P36544"/>
<dbReference type="BioGRID" id="107561">
    <property type="interactions" value="28"/>
</dbReference>
<dbReference type="BioGRID" id="124609">
    <property type="interactions" value="2"/>
</dbReference>
<dbReference type="ComplexPortal" id="CPX-236">
    <property type="entry name" value="Neuronal nicotinic acetylcholine receptor complex, alpha7"/>
</dbReference>
<dbReference type="ComplexPortal" id="CPX-240">
    <property type="entry name" value="Neuronal nicotinic acetylcholine receptor complex, alpha7-beta2"/>
</dbReference>
<dbReference type="CORUM" id="P36544"/>
<dbReference type="FunCoup" id="P36544">
    <property type="interactions" value="1093"/>
</dbReference>
<dbReference type="IntAct" id="P36544">
    <property type="interactions" value="34"/>
</dbReference>
<dbReference type="MINT" id="P36544"/>
<dbReference type="STRING" id="9606.ENSP00000407546"/>
<dbReference type="BindingDB" id="P36544"/>
<dbReference type="ChEMBL" id="CHEMBL2492"/>
<dbReference type="DrugBank" id="DB03128">
    <property type="generic name" value="Acetylcholine"/>
</dbReference>
<dbReference type="DrugBank" id="DB13648">
    <property type="generic name" value="Alcuronium"/>
</dbReference>
<dbReference type="DrugBank" id="DB00915">
    <property type="generic name" value="Amantadine"/>
</dbReference>
<dbReference type="DrugBank" id="DB01351">
    <property type="generic name" value="Amobarbital"/>
</dbReference>
<dbReference type="DrugBank" id="DB01352">
    <property type="generic name" value="Aprobarbital"/>
</dbReference>
<dbReference type="DrugBank" id="DB18707">
    <property type="generic name" value="AVL-3288"/>
</dbReference>
<dbReference type="DrugBank" id="DB12145">
    <property type="generic name" value="AZD-0328"/>
</dbReference>
<dbReference type="DrugBank" id="DB01483">
    <property type="generic name" value="Barbital"/>
</dbReference>
<dbReference type="DrugBank" id="DB19353">
    <property type="generic name" value="Benzgalantamine"/>
</dbReference>
<dbReference type="DrugBank" id="DB06090">
    <property type="generic name" value="Bradanicline"/>
</dbReference>
<dbReference type="DrugBank" id="DB00237">
    <property type="generic name" value="Butabarbital"/>
</dbReference>
<dbReference type="DrugBank" id="DB00241">
    <property type="generic name" value="Butalbital"/>
</dbReference>
<dbReference type="DrugBank" id="DB01353">
    <property type="generic name" value="Butobarbital"/>
</dbReference>
<dbReference type="DrugBank" id="DB09061">
    <property type="generic name" value="Cannabidiol"/>
</dbReference>
<dbReference type="DrugBank" id="DB00122">
    <property type="generic name" value="Choline"/>
</dbReference>
<dbReference type="DrugBank" id="DB14006">
    <property type="generic name" value="Choline salicylate"/>
</dbReference>
<dbReference type="DrugBank" id="DB00565">
    <property type="generic name" value="Cisatracurium"/>
</dbReference>
<dbReference type="DrugBank" id="DB09028">
    <property type="generic name" value="Cytisine"/>
</dbReference>
<dbReference type="DrugBank" id="DB00514">
    <property type="generic name" value="Dextromethorphan"/>
</dbReference>
<dbReference type="DrugBank" id="DB01496">
    <property type="generic name" value="Dihydro-2-thioxo-5-((5-(2-(trifluoromethyl)phenyl)-2-furanyl)methyl)-4,6(1H,5H)-pyrimidinedione"/>
</dbReference>
<dbReference type="DrugBank" id="DB11726">
    <property type="generic name" value="Encenicline"/>
</dbReference>
<dbReference type="DrugBank" id="DB07720">
    <property type="generic name" value="Epibatidine"/>
</dbReference>
<dbReference type="DrugBank" id="DB00898">
    <property type="generic name" value="Ethanol"/>
</dbReference>
<dbReference type="DrugBank" id="DB05586">
    <property type="generic name" value="Facinicline"/>
</dbReference>
<dbReference type="DrugBank" id="DB00674">
    <property type="generic name" value="Galantamine"/>
</dbReference>
<dbReference type="DrugBank" id="DB05708">
    <property type="generic name" value="GTS-21"/>
</dbReference>
<dbReference type="DrugBank" id="DB01354">
    <property type="generic name" value="Heptabarbital"/>
</dbReference>
<dbReference type="DrugBank" id="DB01355">
    <property type="generic name" value="Hexobarbital"/>
</dbReference>
<dbReference type="DrugBank" id="DB11867">
    <property type="generic name" value="JNJ-39393406"/>
</dbReference>
<dbReference type="DrugBank" id="DB01221">
    <property type="generic name" value="Ketamine"/>
</dbReference>
<dbReference type="DrugBank" id="DB05137">
    <property type="generic name" value="Lobeline"/>
</dbReference>
<dbReference type="DrugBank" id="DB00657">
    <property type="generic name" value="Mecamylamine"/>
</dbReference>
<dbReference type="DrugBank" id="DB14009">
    <property type="generic name" value="Medical Cannabis"/>
</dbReference>
<dbReference type="DrugBank" id="DB01043">
    <property type="generic name" value="Memantine"/>
</dbReference>
<dbReference type="DrugBank" id="DB00333">
    <property type="generic name" value="Methadone"/>
</dbReference>
<dbReference type="DrugBank" id="DB00463">
    <property type="generic name" value="Metharbital"/>
</dbReference>
<dbReference type="DrugBank" id="DB00849">
    <property type="generic name" value="Methylphenobarbital"/>
</dbReference>
<dbReference type="DrugBank" id="DB14011">
    <property type="generic name" value="Nabiximols"/>
</dbReference>
<dbReference type="DrugBank" id="DB00184">
    <property type="generic name" value="Nicotine"/>
</dbReference>
<dbReference type="DrugBank" id="DB00312">
    <property type="generic name" value="Pentobarbital"/>
</dbReference>
<dbReference type="DrugBank" id="DB01174">
    <property type="generic name" value="Phenobarbital"/>
</dbReference>
<dbReference type="DrugBank" id="DB00794">
    <property type="generic name" value="Primidone"/>
</dbReference>
<dbReference type="DrugBank" id="DB05740">
    <property type="generic name" value="RPI-78M"/>
</dbReference>
<dbReference type="DrugBank" id="DB00418">
    <property type="generic name" value="Secobarbital"/>
</dbReference>
<dbReference type="DrugBank" id="DB08823">
    <property type="generic name" value="Spinosad"/>
</dbReference>
<dbReference type="DrugBank" id="DB00202">
    <property type="generic name" value="Succinylcholine"/>
</dbReference>
<dbReference type="DrugBank" id="DB00306">
    <property type="generic name" value="Talbutal"/>
</dbReference>
<dbReference type="DrugBank" id="DB14854">
    <property type="generic name" value="TC-6987"/>
</dbReference>
<dbReference type="DrugBank" id="DB01520">
    <property type="generic name" value="Tenocyclidine"/>
</dbReference>
<dbReference type="DrugBank" id="DB00599">
    <property type="generic name" value="Thiopental"/>
</dbReference>
<dbReference type="DrugBank" id="DB00193">
    <property type="generic name" value="Tramadol"/>
</dbReference>
<dbReference type="DrugBank" id="DB01199">
    <property type="generic name" value="Tubocurarine"/>
</dbReference>
<dbReference type="DrugBank" id="DB01273">
    <property type="generic name" value="Varenicline"/>
</dbReference>
<dbReference type="DrugBank" id="DB00246">
    <property type="generic name" value="Ziprasidone"/>
</dbReference>
<dbReference type="DrugCentral" id="P36544"/>
<dbReference type="GuidetoPHARMACOLOGY" id="468"/>
<dbReference type="TCDB" id="1.A.9.1.7">
    <property type="family name" value="the neurotransmitter receptor, cys loop, ligand-gated ion channel (lic) family"/>
</dbReference>
<dbReference type="GlyCosmos" id="P36544">
    <property type="glycosylation" value="3 sites, No reported glycans"/>
</dbReference>
<dbReference type="GlyGen" id="P36544">
    <property type="glycosylation" value="4 sites, 1 O-linked glycan (1 site)"/>
</dbReference>
<dbReference type="iPTMnet" id="P36544"/>
<dbReference type="PhosphoSitePlus" id="P36544"/>
<dbReference type="SwissPalm" id="P36544"/>
<dbReference type="BioMuta" id="CHRNA7"/>
<dbReference type="DMDM" id="2506127"/>
<dbReference type="MassIVE" id="P36544"/>
<dbReference type="PaxDb" id="9606-ENSP00000407546"/>
<dbReference type="PeptideAtlas" id="P36544"/>
<dbReference type="ProteomicsDB" id="55212">
    <molecule id="P36544-2"/>
</dbReference>
<dbReference type="Antibodypedia" id="9478">
    <property type="antibodies" value="301 antibodies from 32 providers"/>
</dbReference>
<dbReference type="DNASU" id="89832"/>
<dbReference type="Ensembl" id="ENST00000306901.9">
    <molecule id="P36544-1"/>
    <property type="protein sequence ID" value="ENSP00000303727.2"/>
    <property type="gene ID" value="ENSG00000175344.19"/>
</dbReference>
<dbReference type="Ensembl" id="ENST00000437966.3">
    <molecule id="P36544-3"/>
    <property type="protein sequence ID" value="ENSP00000399087.3"/>
    <property type="gene ID" value="ENSG00000175344.19"/>
</dbReference>
<dbReference type="Ensembl" id="ENST00000454250.7">
    <molecule id="P36544-2"/>
    <property type="protein sequence ID" value="ENSP00000407546.3"/>
    <property type="gene ID" value="ENSG00000175344.19"/>
</dbReference>
<dbReference type="Ensembl" id="ENST00000455693.3">
    <molecule id="P36544-1"/>
    <property type="protein sequence ID" value="ENSP00000405989.3"/>
    <property type="gene ID" value="ENSG00000274542.1"/>
</dbReference>
<dbReference type="Ensembl" id="ENST00000675428.1">
    <molecule id="P36544-2"/>
    <property type="protein sequence ID" value="ENSP00000502560.1"/>
    <property type="gene ID" value="ENSG00000175344.19"/>
</dbReference>
<dbReference type="GeneID" id="1139"/>
<dbReference type="GeneID" id="89832"/>
<dbReference type="KEGG" id="hsa:1139"/>
<dbReference type="MANE-Select" id="ENST00000306901.9">
    <property type="protein sequence ID" value="ENSP00000303727.2"/>
    <property type="RefSeq nucleotide sequence ID" value="NM_000746.6"/>
    <property type="RefSeq protein sequence ID" value="NP_000737.1"/>
</dbReference>
<dbReference type="UCSC" id="uc001zft.5">
    <molecule id="P36544-1"/>
    <property type="organism name" value="human"/>
</dbReference>
<dbReference type="AGR" id="HGNC:15781"/>
<dbReference type="AGR" id="HGNC:1960"/>
<dbReference type="CTD" id="1139"/>
<dbReference type="CTD" id="89832"/>
<dbReference type="DisGeNET" id="1139"/>
<dbReference type="DisGeNET" id="89832"/>
<dbReference type="GeneCards" id="CHRNA7"/>
<dbReference type="GeneReviews" id="CHRNA7"/>
<dbReference type="HGNC" id="HGNC:1960">
    <property type="gene designation" value="CHRNA7"/>
</dbReference>
<dbReference type="HPA" id="ENSG00000175344">
    <property type="expression patterns" value="Tissue enhanced (adrenal gland, intestine)"/>
</dbReference>
<dbReference type="MalaCards" id="CHRNA7"/>
<dbReference type="MIM" id="118511">
    <property type="type" value="gene"/>
</dbReference>
<dbReference type="neXtProt" id="NX_P36544"/>
<dbReference type="OpenTargets" id="ENSG00000175344"/>
<dbReference type="Orphanet" id="199318">
    <property type="disease" value="15q13.3 microdeletion syndrome"/>
</dbReference>
<dbReference type="PharmGKB" id="PA114"/>
<dbReference type="PharmGKB" id="PA26483"/>
<dbReference type="VEuPathDB" id="HostDB:ENSG00000175344"/>
<dbReference type="eggNOG" id="KOG3646">
    <property type="taxonomic scope" value="Eukaryota"/>
</dbReference>
<dbReference type="GeneTree" id="ENSGT00940000154617"/>
<dbReference type="HOGENOM" id="CLU_018074_0_3_1"/>
<dbReference type="InParanoid" id="P36544"/>
<dbReference type="OMA" id="PWILCMS"/>
<dbReference type="OrthoDB" id="5975154at2759"/>
<dbReference type="PAN-GO" id="P36544">
    <property type="GO annotations" value="11 GO annotations based on evolutionary models"/>
</dbReference>
<dbReference type="PhylomeDB" id="P36544"/>
<dbReference type="TreeFam" id="TF315605"/>
<dbReference type="PathwayCommons" id="P36544"/>
<dbReference type="Reactome" id="R-HSA-629594">
    <property type="pathway name" value="Highly calcium permeable postsynaptic nicotinic acetylcholine receptors"/>
</dbReference>
<dbReference type="SignaLink" id="P36544"/>
<dbReference type="SIGNOR" id="P36544"/>
<dbReference type="BioGRID-ORCS" id="1139">
    <property type="hits" value="14 hits in 1156 CRISPR screens"/>
</dbReference>
<dbReference type="BioGRID-ORCS" id="89832">
    <property type="hits" value="23 hits in 1038 CRISPR screens"/>
</dbReference>
<dbReference type="ChiTaRS" id="CHRNA7">
    <property type="organism name" value="human"/>
</dbReference>
<dbReference type="EvolutionaryTrace" id="P36544"/>
<dbReference type="GeneWiki" id="CHRFAM7A"/>
<dbReference type="GeneWiki" id="CHRNA7"/>
<dbReference type="Pharos" id="P36544">
    <property type="development level" value="Tchem"/>
</dbReference>
<dbReference type="PRO" id="PR:P36544"/>
<dbReference type="Proteomes" id="UP000005640">
    <property type="component" value="Chromosome 15"/>
</dbReference>
<dbReference type="RNAct" id="P36544">
    <property type="molecule type" value="protein"/>
</dbReference>
<dbReference type="Bgee" id="ENSG00000175344">
    <property type="expression patterns" value="Expressed in adrenal tissue and 123 other cell types or tissues"/>
</dbReference>
<dbReference type="ExpressionAtlas" id="P36544">
    <property type="expression patterns" value="baseline and differential"/>
</dbReference>
<dbReference type="GO" id="GO:0005892">
    <property type="term" value="C:acetylcholine-gated channel complex"/>
    <property type="evidence" value="ECO:0000314"/>
    <property type="project" value="UniProtKB"/>
</dbReference>
<dbReference type="GO" id="GO:0034703">
    <property type="term" value="C:cation channel complex"/>
    <property type="evidence" value="ECO:0000314"/>
    <property type="project" value="UniProt"/>
</dbReference>
<dbReference type="GO" id="GO:0030425">
    <property type="term" value="C:dendrite"/>
    <property type="evidence" value="ECO:0000250"/>
    <property type="project" value="UniProtKB"/>
</dbReference>
<dbReference type="GO" id="GO:0005789">
    <property type="term" value="C:endoplasmic reticulum membrane"/>
    <property type="evidence" value="ECO:0000250"/>
    <property type="project" value="UniProt"/>
</dbReference>
<dbReference type="GO" id="GO:0016020">
    <property type="term" value="C:membrane"/>
    <property type="evidence" value="ECO:0000303"/>
    <property type="project" value="UniProtKB"/>
</dbReference>
<dbReference type="GO" id="GO:0043005">
    <property type="term" value="C:neuron projection"/>
    <property type="evidence" value="ECO:0000318"/>
    <property type="project" value="GO_Central"/>
</dbReference>
<dbReference type="GO" id="GO:0098878">
    <property type="term" value="C:neurotransmitter receptor complex"/>
    <property type="evidence" value="ECO:0000314"/>
    <property type="project" value="UniProt"/>
</dbReference>
<dbReference type="GO" id="GO:0005886">
    <property type="term" value="C:plasma membrane"/>
    <property type="evidence" value="ECO:0000314"/>
    <property type="project" value="UniProtKB"/>
</dbReference>
<dbReference type="GO" id="GO:0044853">
    <property type="term" value="C:plasma membrane raft"/>
    <property type="evidence" value="ECO:0000250"/>
    <property type="project" value="ARUK-UCL"/>
</dbReference>
<dbReference type="GO" id="GO:0098794">
    <property type="term" value="C:postsynapse"/>
    <property type="evidence" value="ECO:0000304"/>
    <property type="project" value="ARUK-UCL"/>
</dbReference>
<dbReference type="GO" id="GO:0045211">
    <property type="term" value="C:postsynaptic membrane"/>
    <property type="evidence" value="ECO:0000314"/>
    <property type="project" value="ParkinsonsUK-UCL"/>
</dbReference>
<dbReference type="GO" id="GO:0045202">
    <property type="term" value="C:synapse"/>
    <property type="evidence" value="ECO:0000318"/>
    <property type="project" value="GO_Central"/>
</dbReference>
<dbReference type="GO" id="GO:0042166">
    <property type="term" value="F:acetylcholine binding"/>
    <property type="evidence" value="ECO:0000314"/>
    <property type="project" value="UniProtKB"/>
</dbReference>
<dbReference type="GO" id="GO:0015464">
    <property type="term" value="F:acetylcholine receptor activity"/>
    <property type="evidence" value="ECO:0000314"/>
    <property type="project" value="UniProtKB"/>
</dbReference>
<dbReference type="GO" id="GO:0022848">
    <property type="term" value="F:acetylcholine-gated monoatomic cation-selective channel activity"/>
    <property type="evidence" value="ECO:0000314"/>
    <property type="project" value="UniProtKB"/>
</dbReference>
<dbReference type="GO" id="GO:0001540">
    <property type="term" value="F:amyloid-beta binding"/>
    <property type="evidence" value="ECO:0000353"/>
    <property type="project" value="UniProtKB"/>
</dbReference>
<dbReference type="GO" id="GO:0005262">
    <property type="term" value="F:calcium channel activity"/>
    <property type="evidence" value="ECO:0000304"/>
    <property type="project" value="ARUK-UCL"/>
</dbReference>
<dbReference type="GO" id="GO:0017081">
    <property type="term" value="F:chloride channel regulator activity"/>
    <property type="evidence" value="ECO:0000314"/>
    <property type="project" value="UniProtKB"/>
</dbReference>
<dbReference type="GO" id="GO:0005216">
    <property type="term" value="F:monoatomic ion channel activity"/>
    <property type="evidence" value="ECO:0000314"/>
    <property type="project" value="ARUK-UCL"/>
</dbReference>
<dbReference type="GO" id="GO:0042803">
    <property type="term" value="F:protein homodimerization activity"/>
    <property type="evidence" value="ECO:0000314"/>
    <property type="project" value="UniProtKB"/>
</dbReference>
<dbReference type="GO" id="GO:0015643">
    <property type="term" value="F:toxic substance binding"/>
    <property type="evidence" value="ECO:0000314"/>
    <property type="project" value="UniProtKB"/>
</dbReference>
<dbReference type="GO" id="GO:0004888">
    <property type="term" value="F:transmembrane signaling receptor activity"/>
    <property type="evidence" value="ECO:0000314"/>
    <property type="project" value="UniProt"/>
</dbReference>
<dbReference type="GO" id="GO:0095500">
    <property type="term" value="P:acetylcholine receptor signaling pathway"/>
    <property type="evidence" value="ECO:0000314"/>
    <property type="project" value="UniProt"/>
</dbReference>
<dbReference type="GO" id="GO:0006816">
    <property type="term" value="P:calcium ion transport"/>
    <property type="evidence" value="ECO:0000314"/>
    <property type="project" value="UniProtKB"/>
</dbReference>
<dbReference type="GO" id="GO:0007268">
    <property type="term" value="P:chemical synaptic transmission"/>
    <property type="evidence" value="ECO:0000314"/>
    <property type="project" value="UniProt"/>
</dbReference>
<dbReference type="GO" id="GO:0050890">
    <property type="term" value="P:cognition"/>
    <property type="evidence" value="ECO:0000315"/>
    <property type="project" value="UniProtKB"/>
</dbReference>
<dbReference type="GO" id="GO:0140059">
    <property type="term" value="P:dendrite arborization"/>
    <property type="evidence" value="ECO:0000250"/>
    <property type="project" value="ParkinsonsUK-UCL"/>
</dbReference>
<dbReference type="GO" id="GO:0097061">
    <property type="term" value="P:dendritic spine organization"/>
    <property type="evidence" value="ECO:0000250"/>
    <property type="project" value="ParkinsonsUK-UCL"/>
</dbReference>
<dbReference type="GO" id="GO:0060079">
    <property type="term" value="P:excitatory postsynaptic potential"/>
    <property type="evidence" value="ECO:0000314"/>
    <property type="project" value="ParkinsonsUK-UCL"/>
</dbReference>
<dbReference type="GO" id="GO:0006874">
    <property type="term" value="P:intracellular calcium ion homeostasis"/>
    <property type="evidence" value="ECO:0000315"/>
    <property type="project" value="UniProtKB"/>
</dbReference>
<dbReference type="GO" id="GO:0007611">
    <property type="term" value="P:learning or memory"/>
    <property type="evidence" value="ECO:0000250"/>
    <property type="project" value="ARUK-UCL"/>
</dbReference>
<dbReference type="GO" id="GO:1990806">
    <property type="term" value="P:ligand-gated ion channel signaling pathway"/>
    <property type="evidence" value="ECO:0000314"/>
    <property type="project" value="UniProt"/>
</dbReference>
<dbReference type="GO" id="GO:0007613">
    <property type="term" value="P:memory"/>
    <property type="evidence" value="ECO:0000250"/>
    <property type="project" value="ARUK-UCL"/>
</dbReference>
<dbReference type="GO" id="GO:0098815">
    <property type="term" value="P:modulation of excitatory postsynaptic potential"/>
    <property type="evidence" value="ECO:0000250"/>
    <property type="project" value="ARUK-UCL"/>
</dbReference>
<dbReference type="GO" id="GO:0034220">
    <property type="term" value="P:monoatomic ion transmembrane transport"/>
    <property type="evidence" value="ECO:0000314"/>
    <property type="project" value="ParkinsonsUK-UCL"/>
</dbReference>
<dbReference type="GO" id="GO:0006811">
    <property type="term" value="P:monoatomic ion transport"/>
    <property type="evidence" value="ECO:0000303"/>
    <property type="project" value="UniProtKB"/>
</dbReference>
<dbReference type="GO" id="GO:1902430">
    <property type="term" value="P:negative regulation of amyloid-beta formation"/>
    <property type="evidence" value="ECO:0000316"/>
    <property type="project" value="ARUK-UCL"/>
</dbReference>
<dbReference type="GO" id="GO:0043124">
    <property type="term" value="P:negative regulation of canonical NF-kappaB signal transduction"/>
    <property type="evidence" value="ECO:0000314"/>
    <property type="project" value="UniProt"/>
</dbReference>
<dbReference type="GO" id="GO:1900016">
    <property type="term" value="P:negative regulation of cytokine production involved in inflammatory response"/>
    <property type="evidence" value="ECO:0000314"/>
    <property type="project" value="UniProtKB"/>
</dbReference>
<dbReference type="GO" id="GO:0032720">
    <property type="term" value="P:negative regulation of tumor necrosis factor production"/>
    <property type="evidence" value="ECO:0000314"/>
    <property type="project" value="UniProtKB"/>
</dbReference>
<dbReference type="GO" id="GO:1902004">
    <property type="term" value="P:positive regulation of amyloid-beta formation"/>
    <property type="evidence" value="ECO:0000250"/>
    <property type="project" value="ARUK-UCL"/>
</dbReference>
<dbReference type="GO" id="GO:0045766">
    <property type="term" value="P:positive regulation of angiogenesis"/>
    <property type="evidence" value="ECO:0000315"/>
    <property type="project" value="UniProtKB"/>
</dbReference>
<dbReference type="GO" id="GO:0008284">
    <property type="term" value="P:positive regulation of cell population proliferation"/>
    <property type="evidence" value="ECO:0000315"/>
    <property type="project" value="UniProtKB"/>
</dbReference>
<dbReference type="GO" id="GO:0070374">
    <property type="term" value="P:positive regulation of ERK1 and ERK2 cascade"/>
    <property type="evidence" value="ECO:0000250"/>
    <property type="project" value="ARUK-UCL"/>
</dbReference>
<dbReference type="GO" id="GO:2000463">
    <property type="term" value="P:positive regulation of excitatory postsynaptic potential"/>
    <property type="evidence" value="ECO:0000250"/>
    <property type="project" value="ARUK-UCL"/>
</dbReference>
<dbReference type="GO" id="GO:1900273">
    <property type="term" value="P:positive regulation of long-term synaptic potentiation"/>
    <property type="evidence" value="ECO:0000250"/>
    <property type="project" value="ARUK-UCL"/>
</dbReference>
<dbReference type="GO" id="GO:0043410">
    <property type="term" value="P:positive regulation of MAPK cascade"/>
    <property type="evidence" value="ECO:0000314"/>
    <property type="project" value="UniProtKB"/>
</dbReference>
<dbReference type="GO" id="GO:0051247">
    <property type="term" value="P:positive regulation of protein metabolic process"/>
    <property type="evidence" value="ECO:0000250"/>
    <property type="project" value="ARUK-UCL"/>
</dbReference>
<dbReference type="GO" id="GO:1905906">
    <property type="term" value="P:regulation of amyloid fibril formation"/>
    <property type="evidence" value="ECO:0000250"/>
    <property type="project" value="ARUK-UCL"/>
</dbReference>
<dbReference type="GO" id="GO:1902991">
    <property type="term" value="P:regulation of amyloid precursor protein catabolic process"/>
    <property type="evidence" value="ECO:0000316"/>
    <property type="project" value="ARUK-UCL"/>
</dbReference>
<dbReference type="GO" id="GO:0042391">
    <property type="term" value="P:regulation of membrane potential"/>
    <property type="evidence" value="ECO:0000318"/>
    <property type="project" value="GO_Central"/>
</dbReference>
<dbReference type="GO" id="GO:1905144">
    <property type="term" value="P:response to acetylcholine"/>
    <property type="evidence" value="ECO:0000314"/>
    <property type="project" value="ARUK-UCL"/>
</dbReference>
<dbReference type="GO" id="GO:1904645">
    <property type="term" value="P:response to amyloid-beta"/>
    <property type="evidence" value="ECO:0000250"/>
    <property type="project" value="ARUK-UCL"/>
</dbReference>
<dbReference type="GO" id="GO:0001666">
    <property type="term" value="P:response to hypoxia"/>
    <property type="evidence" value="ECO:0000314"/>
    <property type="project" value="UniProtKB"/>
</dbReference>
<dbReference type="GO" id="GO:0035094">
    <property type="term" value="P:response to nicotine"/>
    <property type="evidence" value="ECO:0000314"/>
    <property type="project" value="UniProtKB"/>
</dbReference>
<dbReference type="GO" id="GO:0050893">
    <property type="term" value="P:sensory processing"/>
    <property type="evidence" value="ECO:0000250"/>
    <property type="project" value="ARUK-UCL"/>
</dbReference>
<dbReference type="GO" id="GO:0007614">
    <property type="term" value="P:short-term memory"/>
    <property type="evidence" value="ECO:0000250"/>
    <property type="project" value="ARUK-UCL"/>
</dbReference>
<dbReference type="GO" id="GO:0007165">
    <property type="term" value="P:signal transduction"/>
    <property type="evidence" value="ECO:0000314"/>
    <property type="project" value="UniProtKB"/>
</dbReference>
<dbReference type="GO" id="GO:0050808">
    <property type="term" value="P:synapse organization"/>
    <property type="evidence" value="ECO:0000250"/>
    <property type="project" value="ARUK-UCL"/>
</dbReference>
<dbReference type="GO" id="GO:0060084">
    <property type="term" value="P:synaptic transmission involved in micturition"/>
    <property type="evidence" value="ECO:0000250"/>
    <property type="project" value="UniProt"/>
</dbReference>
<dbReference type="CDD" id="cd19020">
    <property type="entry name" value="LGIC_ECD_nAChR_A7"/>
    <property type="match status" value="1"/>
</dbReference>
<dbReference type="CDD" id="cd19051">
    <property type="entry name" value="LGIC_TM_cation"/>
    <property type="match status" value="1"/>
</dbReference>
<dbReference type="FunFam" id="1.20.58.390:FF:000007">
    <property type="entry name" value="Neuronal acetylcholine receptor subunit alpha-7"/>
    <property type="match status" value="1"/>
</dbReference>
<dbReference type="FunFam" id="2.70.170.10:FF:000009">
    <property type="entry name" value="Neuronal acetylcholine receptor subunit alpha-7"/>
    <property type="match status" value="1"/>
</dbReference>
<dbReference type="FunFam" id="1.20.58.390:FF:000011">
    <property type="entry name" value="neuronal acetylcholine receptor subunit alpha-7"/>
    <property type="match status" value="1"/>
</dbReference>
<dbReference type="Gene3D" id="2.70.170.10">
    <property type="entry name" value="Neurotransmitter-gated ion-channel ligand-binding domain"/>
    <property type="match status" value="1"/>
</dbReference>
<dbReference type="Gene3D" id="1.20.58.390">
    <property type="entry name" value="Neurotransmitter-gated ion-channel transmembrane domain"/>
    <property type="match status" value="2"/>
</dbReference>
<dbReference type="InterPro" id="IPR006202">
    <property type="entry name" value="Neur_chan_lig-bd"/>
</dbReference>
<dbReference type="InterPro" id="IPR036734">
    <property type="entry name" value="Neur_chan_lig-bd_sf"/>
</dbReference>
<dbReference type="InterPro" id="IPR006201">
    <property type="entry name" value="Neur_channel"/>
</dbReference>
<dbReference type="InterPro" id="IPR036719">
    <property type="entry name" value="Neuro-gated_channel_TM_sf"/>
</dbReference>
<dbReference type="InterPro" id="IPR038050">
    <property type="entry name" value="Neuro_actylchol_rec"/>
</dbReference>
<dbReference type="InterPro" id="IPR006029">
    <property type="entry name" value="Neurotrans-gated_channel_TM"/>
</dbReference>
<dbReference type="InterPro" id="IPR018000">
    <property type="entry name" value="Neurotransmitter_ion_chnl_CS"/>
</dbReference>
<dbReference type="InterPro" id="IPR002394">
    <property type="entry name" value="Nicotinic_acetylcholine_rcpt"/>
</dbReference>
<dbReference type="NCBIfam" id="TIGR00860">
    <property type="entry name" value="LIC"/>
    <property type="match status" value="1"/>
</dbReference>
<dbReference type="PANTHER" id="PTHR18945">
    <property type="entry name" value="NEUROTRANSMITTER GATED ION CHANNEL"/>
    <property type="match status" value="1"/>
</dbReference>
<dbReference type="Pfam" id="PF02931">
    <property type="entry name" value="Neur_chan_LBD"/>
    <property type="match status" value="1"/>
</dbReference>
<dbReference type="Pfam" id="PF02932">
    <property type="entry name" value="Neur_chan_memb"/>
    <property type="match status" value="1"/>
</dbReference>
<dbReference type="PRINTS" id="PR00254">
    <property type="entry name" value="NICOTINICR"/>
</dbReference>
<dbReference type="PRINTS" id="PR00252">
    <property type="entry name" value="NRIONCHANNEL"/>
</dbReference>
<dbReference type="SUPFAM" id="SSF90112">
    <property type="entry name" value="Neurotransmitter-gated ion-channel transmembrane pore"/>
    <property type="match status" value="1"/>
</dbReference>
<dbReference type="SUPFAM" id="SSF63712">
    <property type="entry name" value="Nicotinic receptor ligand binding domain-like"/>
    <property type="match status" value="1"/>
</dbReference>
<dbReference type="PROSITE" id="PS00236">
    <property type="entry name" value="NEUROTR_ION_CHANNEL"/>
    <property type="match status" value="1"/>
</dbReference>
<sequence>MRCSPGGVWLALAASLLHVSLQGEFQRKLYKELVKNYNPLERPVANDSQPLTVYFSLSLLQIMDVDEKNQVLTTNIWLQMSWTDHYLQWNVSEYPGVKTVRFPDGQIWKPDILLYNSADERFDATFHTNVLVNSSGHCQYLPPGIFKSSCYIDVRWFPFDVQHCKLKFGSWSYGGWSLDLQMQEADISGYIPNGEWDLVGIPGKRSERFYECCKEPYPDVTFTVTMRRRTLYYGLNLLIPCVLISALALLVFLLPADSGEKISLGITVLLSLTVFMLLVAEIMPATSDSVPLIAQYFASTMIIVGLSVVVTVIVLQYHHHDPDGGKMPKWTRVILLNWCAWFLRMKRPGEDKVRPACQHKQRRCSLASVEMSAVAPPPASNGNLLYIGFRGLDGVHCVPTPDSGVVCGRMACSPTHDEHLLHGGQPPEGDPDLAKILEEVRYIANRFRCQDESEAVCSEWKFAACVVDRLCLMAFSVFTIICTIGILMSAPNFVEAVSKDFA</sequence>